<comment type="function">
    <text evidence="1 6 9 10 11 12 13 14 15 16 17 18 19 23 24 25 26 28 29 31 33 35 36 37 39 41">Serine/threonine protein kinase which is a central regulator of cellular metabolism, growth and survival in response to hormones, growth factors, nutrients, energy and stress signals (PubMed:15467718, PubMed:15485918, PubMed:15545625, PubMed:16221682, PubMed:16915281, PubMed:16962653, PubMed:18046414, PubMed:19440205, PubMed:21659604). MTOR directly or indirectly regulates the phosphorylation of at least 800 proteins (PubMed:15467718, PubMed:15545625, PubMed:16221682, PubMed:16915281, PubMed:16962653, PubMed:18046414, PubMed:19440205, PubMed:21659604). Functions as part of 2 structurally and functionally distinct signaling complexes mTORC1 and mTORC2 (mTOR complex 1 and 2) (PubMed:15467718, PubMed:16962653, PubMed:21659604). In response to nutrients, growth factors or amino acids, mTORC1 is recruited to the lysosome membrane and promotes protein, lipid and nucleotide synthesis by phosphorylating key regulators of mRNA translation and ribosome synthesis (PubMed:15485918). This includes phosphorylation of EIF4EBP1 and release of its inhibition toward the elongation initiation factor 4E (eiF4E) (PubMed:15485918). Moreover, phosphorylates and activates RPS6KB1 and RPS6KB2 that promote protein synthesis by modulating the activity of their downstream targets including ribosomal protein S6, eukaryotic translation initiation factor EIF4B, and the inhibitor of translation initiation PDCD4 (PubMed:15485918). Stimulates the pyrimidine biosynthesis pathway, both by acute regulation through RPS6KB1-mediated phosphorylation of the biosynthetic enzyme CAD, and delayed regulation, through transcriptional enhancement of the pentose phosphate pathway which produces 5-phosphoribosyl-1-pyrophosphate (PRPP), an allosteric activator of CAD at a later step in synthesis, this function is dependent on the mTORC1 complex (By similarity). Regulates ribosome synthesis by activating RNA polymerase III-dependent transcription through phosphorylation and inhibition of MAF1 an RNA polymerase III-repressor (By similarity). Activates dormant ribosomes by mediating phosphorylation of SERBP1, leading to SERBP1 inactivation and reactivation of translation (By similarity). In parallel to protein synthesis, also regulates lipid synthesis through SREBF1/SREBP1 and LPIN1 (PubMed:11792863). To maintain energy homeostasis mTORC1 may also regulate mitochondrial biogenesis through regulation of PPARGC1A (PubMed:18046414). In the same time, mTORC1 inhibits catabolic pathways: negatively regulates autophagy through phosphorylation of ULK1 (PubMed:21258367). Under nutrient sufficiency, phosphorylates ULK1 at 'Ser-758', disrupting the interaction with AMPK and preventing activation of ULK1 (PubMed:21258367). Also prevents autophagy through phosphorylation of the autophagy inhibitor DAP (By similarity). Also prevents autophagy by phosphorylating RUBCNL/Pacer under nutrient-rich conditions (By similarity). Prevents autophagy by mediating phosphorylation of AMBRA1, thereby inhibiting AMBRA1 ability to mediate ubiquitination of ULK1 and interaction between AMBRA1 and PPP2CA (By similarity). mTORC1 exerts a feedback control on upstream growth factor signaling that includes phosphorylation and activation of GRB10 a INSR-dependent signaling suppressor (PubMed:21659604). Among other potential targets mTORC1 may phosphorylate CLIP1 and regulate microtubules (By similarity). The mTORC1 complex is inhibited in response to starvation and amino acid depletion (By similarity). The non-canonical mTORC1 complex, which acts independently of RHEB, specifically mediates phosphorylation of MiT/TFE factors TFEB and TFE3 in the presence of nutrients, promoting their cytosolic retention and inactivation (PubMed:27913603). Upon starvation or lysosomal stress, inhibition of mTORC1 induces dephosphorylation and nuclear translocation of TFEB and TFE3, promoting their transcription factor activity (PubMed:27913603). The mTORC1 complex regulates pyroptosis in macrophages by promoting GSDMD oligomerization (PubMed:34289345). MTOR phosphorylates RPTOR which in turn inhibits mTORC1 (PubMed:19346248). As part of the mTORC2 complex, MTOR transduces signals from growth factors to pathways involved in proliferation, cytoskeletal organization, lipogenesis and anabolic output (PubMed:18566586, PubMed:21045808, PubMed:21321111, PubMed:24670654, PubMed:29232555, PubMed:31548312, PubMed:33850054). In response to growth factors, mTORC2 phosphorylates and activates AGC protein kinase family members, including AKT (AKT1, AKT2 and AKT3), PKC (PRKCA, PRKCB and PRKCE) and SGK1 (PubMed:18566587, PubMed:18566586, PubMed:21045808, PubMed:21321111, PubMed:24670654, PubMed:31548312, PubMed:33850054). In contrast to mTORC1, mTORC2 is nutrient-insensitive. mTORC2 plays a critical role in AKT1 activation by mediating phosphorylation of different sites depending on the context, such as 'Thr-450', 'Ser-473', 'Ser-477' or 'Thr-479', facilitating the phosphorylation of the activation loop of AKT1 on 'Thr-308' by PDPK1/PDK1 which is a prerequisite for full activation (PubMed:18566586, PubMed:21321111, PubMed:24670654, PubMed:33850054). mTORC2 also regulates the phosphorylation of SGK1 at 'Ser-422' (By similarity). mTORC2 may regulate the actin cytoskeleton, through phosphorylation of PRKCA, PXN and activation of the Rho-type guanine nucleotide exchange factors RHOA and RAC1A or RAC1B (By similarity). The mTORC2 complex also phosphorylates various proteins involved in insulin signaling, such as FBXW8 and IGF2BP1 (PubMed:23142081, PubMed:23388827). May also regulate insulin signaling by acting as a tyrosine protein kinase that catalyzes phosphorylation of IGF1R and INSR (By similarity). Regulates osteoclastogenesis by adjusting the expression of CEBPB isoforms (PubMed:19440205). Plays an important regulatory role in the circadian clock function; regulates period length and rhythm amplitude of the suprachiasmatic nucleus (SCN) and liver clocks (PubMed:29750810).</text>
</comment>
<comment type="catalytic activity">
    <reaction evidence="6 17 25 33 37">
        <text>L-seryl-[protein] + ATP = O-phospho-L-seryl-[protein] + ADP + H(+)</text>
        <dbReference type="Rhea" id="RHEA:17989"/>
        <dbReference type="Rhea" id="RHEA-COMP:9863"/>
        <dbReference type="Rhea" id="RHEA-COMP:11604"/>
        <dbReference type="ChEBI" id="CHEBI:15378"/>
        <dbReference type="ChEBI" id="CHEBI:29999"/>
        <dbReference type="ChEBI" id="CHEBI:30616"/>
        <dbReference type="ChEBI" id="CHEBI:83421"/>
        <dbReference type="ChEBI" id="CHEBI:456216"/>
        <dbReference type="EC" id="2.7.11.1"/>
    </reaction>
</comment>
<comment type="catalytic activity">
    <reaction evidence="6 16">
        <text>L-threonyl-[protein] + ATP = O-phospho-L-threonyl-[protein] + ADP + H(+)</text>
        <dbReference type="Rhea" id="RHEA:46608"/>
        <dbReference type="Rhea" id="RHEA-COMP:11060"/>
        <dbReference type="Rhea" id="RHEA-COMP:11605"/>
        <dbReference type="ChEBI" id="CHEBI:15378"/>
        <dbReference type="ChEBI" id="CHEBI:30013"/>
        <dbReference type="ChEBI" id="CHEBI:30616"/>
        <dbReference type="ChEBI" id="CHEBI:61977"/>
        <dbReference type="ChEBI" id="CHEBI:456216"/>
        <dbReference type="EC" id="2.7.11.1"/>
    </reaction>
</comment>
<comment type="catalytic activity">
    <reaction evidence="1">
        <text>L-tyrosyl-[protein] + ATP = O-phospho-L-tyrosyl-[protein] + ADP + H(+)</text>
        <dbReference type="Rhea" id="RHEA:10596"/>
        <dbReference type="Rhea" id="RHEA-COMP:10136"/>
        <dbReference type="Rhea" id="RHEA-COMP:20101"/>
        <dbReference type="ChEBI" id="CHEBI:15378"/>
        <dbReference type="ChEBI" id="CHEBI:30616"/>
        <dbReference type="ChEBI" id="CHEBI:46858"/>
        <dbReference type="ChEBI" id="CHEBI:61978"/>
        <dbReference type="ChEBI" id="CHEBI:456216"/>
        <dbReference type="EC" id="2.7.10.2"/>
    </reaction>
    <physiologicalReaction direction="left-to-right" evidence="1">
        <dbReference type="Rhea" id="RHEA:10597"/>
    </physiologicalReaction>
</comment>
<comment type="activity regulation">
    <text evidence="1 11 20 23 42">The mTORC1 complex is activated in response to nutrients, growth factors or amino acids: activation requires relocalization of the mTORC1 complex to lysosomes that is mediated by the Ragulator complex, SLC38A9, and the Rag GTPases RagA/RRAGA, RagB/RRAGB, RagC/RRAGC and RagD/RRAGD (By similarity). Activation of mTORC1 by growth factors such as insulin involves AKT1-mediated phosphorylation of TSC1-TSC2, which leads to the activation of the RHEB GTPase a potent activator of the protein kinase activity of mTORC1 (By similarity). Insulin-stimulated and amino acid-dependent phosphorylation at Ser-1261 promotes autophosphorylation and the activation of mTORC1 (PubMed:19487463). On the other hand, low cellular energy levels can inhibit mTORC1 through activation of PRKAA1 while hypoxia inhibits mTORC1 through a REDD1-dependent mechanism which may also require PRKAA1 (PubMed:15545625). The kinase activity of MTOR within the mTORC1 complex is positively regulated by MLST8 (By similarity). The kinase activity of MTOR is inhibited by DEPTOR and AKT1S1 (By similarity). The non-canonical mTORC1 complex is independent of the RHEB GTPase and specifically mediates phosphorylation of MiT/TFE factors TFEB and TFE3 but not other mTORC1 substrates: it is activated by FLCN, which activates Rag GTPases RagC/RRAGC and RagD/RRAGD (By similarity). MTOR is the target of the immunosuppressive and anti-cancer drug rapamycin which acts in complex with FKBP1A/FKBP12, and specifically inhibits its kinase activity (PubMed:7809080). mTORC2 is also activated by growth factors, but seems to be nutrient-insensitive (By similarity). mTORC2 associates and is directly activated by ribosomes (PubMed:21045808). mTORC2 may also be regulated by RHEB but in an indirect manner through the PI3K signaling pathway (By similarity).</text>
</comment>
<comment type="subunit">
    <text evidence="1 9 13 14 21 22 27 38">Part of the mechanistic target of rapamycin complex 1 (mTORC1) which contains MTOR, MLST8 and RPTOR (PubMed:20801936). The mTORC1 complex is a 1 Md obligate dimer of two stoichiometric heterotetramers with overall dimensions of 290 A x 210 A x 135 A (By similarity). It has a rhomboid shape and a central cavity, the dimeric interfaces are formed by interlocking interactions between the two MTOR and the two RPTOR subunits (By similarity). The MLST8 subunit forms distal foot-like protuberances, and contacts only one MTOR within the complex, while the small AKT1S1/PRAS40 localizes to the midsection of the central core, in close proximity to RPTOR (By similarity). mTORC1 associates with AKT1S1/PRAS40, which inhibits its activity by blocking MTOR substrate-recruitment site (By similarity). Component of the mechanistic target of rapamycin complex 2 (mTORC2), consisting in two heterotretramers composed of MTOR, MLST8, RICTOR and MAPKAP1/SIN1 (PubMed:15467718, PubMed:16962653). Interacts with PLPP7 and PML (PubMed:16915281, PubMed:19704009). Interacts with PRR5 and RICTOR; the interaction is direct within the mTORC2 complex and interaction with RICTOR is enhanced by deubiquitination of RICTOR by USP9X (PubMed:20801936). mTORC1 and mTORC2 associate with DEPTOR, which regulates their activity (By similarity). Interacts with WAC; WAC positively regulates MTOR activity by promoting the assembly of the TTT complex composed of TELO2, TTI1 and TTI2 and the RUVBL complex composed of RUVBL1 and RUVBL2 into the TTT-RUVBL complex which leads to the dimerization of the mTORC1 complex and its subsequent activation (By similarity). Interacts with UBQLN1 (By similarity). Interacts with TTI1 and TELO2 (By similarity). Interacts with CLIP1; phosphorylates and regulates CLIP1 (By similarity). Interacts with NBN (By similarity). Interacts with HTR6 (PubMed:23027611). Interacts with BRAT1 (By similarity). Interacts with MEAK7 (via C-terminal domain); the interaction increases upon nutrient stimulation (By similarity). Interacts with TM4SF5; the interaction is positively regulated by arginine and is negatively regulated by leucine (By similarity). Interacts with GPR137B (By similarity). Interacts with NCKAP1L (By similarity). Interacts with TPCN1 and TPCN2; the interaction is required for TPCN1 and TPCN2 sensitivity to ATP (By similarity). Interacts with ATP6V1A and with CRYAB, forming a ternary complex (PubMed:31786107). Interacts with SLC38A7; this interaction mediates the recruitment of mTORC1 to the lysosome and its subsequent activation (By similarity). Interacts with TSPAN8 (By similarity).</text>
</comment>
<comment type="interaction">
    <interactant intactId="EBI-1571628">
        <id>Q9JLN9</id>
    </interactant>
    <interactant intactId="EBI-1634316">
        <id>Q9DCH4</id>
        <label>Eif3f</label>
    </interactant>
    <organismsDiffer>false</organismsDiffer>
    <experiments>5</experiments>
</comment>
<comment type="interaction">
    <interactant intactId="EBI-1571628">
        <id>Q9JLN9</id>
    </interactant>
    <interactant intactId="EBI-4286572">
        <id>Q6QI06</id>
        <label>Rictor</label>
    </interactant>
    <organismsDiffer>false</organismsDiffer>
    <experiments>12</experiments>
</comment>
<comment type="interaction">
    <interactant intactId="EBI-1571628">
        <id>Q9JLN9</id>
    </interactant>
    <interactant intactId="EBI-4567273">
        <id>Q8K4Q0</id>
        <label>Rptor</label>
    </interactant>
    <organismsDiffer>false</organismsDiffer>
    <experiments>9</experiments>
</comment>
<comment type="interaction">
    <interactant intactId="EBI-1571628">
        <id>Q9JLN9</id>
    </interactant>
    <interactant intactId="EBI-8390771">
        <id>O70405</id>
        <label>Ulk1</label>
    </interactant>
    <organismsDiffer>false</organismsDiffer>
    <experiments>3</experiments>
</comment>
<comment type="interaction">
    <interactant intactId="EBI-1571628">
        <id>Q9JLN9</id>
    </interactant>
    <interactant intactId="EBI-6921536">
        <id>Q00899</id>
        <label>Yy1</label>
    </interactant>
    <organismsDiffer>false</organismsDiffer>
    <experiments>4</experiments>
</comment>
<comment type="interaction">
    <interactant intactId="EBI-1571628">
        <id>Q9JLN9</id>
    </interactant>
    <interactant intactId="EBI-74090">
        <id>Q13541</id>
        <label>EIF4EBP1</label>
    </interactant>
    <organismsDiffer>true</organismsDiffer>
    <experiments>2</experiments>
</comment>
<comment type="interaction">
    <interactant intactId="EBI-1571628">
        <id>Q9JLN9</id>
    </interactant>
    <interactant intactId="EBI-1567928">
        <id>Q8N122</id>
        <label>RPTOR</label>
    </interactant>
    <organismsDiffer>true</organismsDiffer>
    <experiments>5</experiments>
</comment>
<comment type="subcellular location">
    <subcellularLocation>
        <location evidence="1">Lysosome membrane</location>
        <topology evidence="1">Peripheral membrane protein</topology>
        <orientation evidence="1">Cytoplasmic side</orientation>
    </subcellularLocation>
    <subcellularLocation>
        <location evidence="1">Endoplasmic reticulum membrane</location>
        <topology evidence="1">Peripheral membrane protein</topology>
        <orientation evidence="1">Cytoplasmic side</orientation>
    </subcellularLocation>
    <subcellularLocation>
        <location evidence="1">Golgi apparatus membrane</location>
        <topology evidence="1">Peripheral membrane protein</topology>
        <orientation evidence="1">Cytoplasmic side</orientation>
    </subcellularLocation>
    <subcellularLocation>
        <location evidence="1">Cell membrane</location>
        <topology evidence="1">Peripheral membrane protein</topology>
    </subcellularLocation>
    <subcellularLocation>
        <location evidence="7">Mitochondrion outer membrane</location>
        <topology evidence="1">Peripheral membrane protein</topology>
        <orientation evidence="1">Cytoplasmic side</orientation>
    </subcellularLocation>
    <subcellularLocation>
        <location evidence="7 13">Cytoplasm</location>
    </subcellularLocation>
    <subcellularLocation>
        <location evidence="13">Nucleus</location>
    </subcellularLocation>
    <subcellularLocation>
        <location evidence="13">Nucleus</location>
        <location evidence="13">PML body</location>
    </subcellularLocation>
    <subcellularLocation>
        <location evidence="1">Microsome membrane</location>
    </subcellularLocation>
    <subcellularLocation>
        <location evidence="1">Cytoplasmic vesicle</location>
        <location evidence="1">Phagosome</location>
    </subcellularLocation>
    <text evidence="1 13">Shuttles between cytoplasm and nucleus (PubMed:16915281). Accumulates in the nucleus in response to hypoxia (PubMed:16915281). Targeting to lysosomes depends on amino acid availability and RRAGA and RRAGB (By similarity). Lysosome targeting also depends on interaction with MEAK7 (By similarity). Translocates to the lysosome membrane in the presence of TM4SF5 (By similarity). The mTORC2 complex localizes to membranes: mTORC2 is active at the plasma membrane, endoplasmic reticulum membrane and lysosomes (By similarity).</text>
</comment>
<comment type="alternative products">
    <event type="alternative splicing"/>
    <isoform>
        <id>Q9JLN9-1</id>
        <name>1</name>
        <sequence type="displayed"/>
    </isoform>
    <isoform>
        <id>Q9JLN9-2</id>
        <name>2</name>
        <sequence type="described" ref="VSP_011909 VSP_011910"/>
    </isoform>
</comment>
<comment type="domain">
    <text evidence="1">The kinase domain (PI3K/PI4K) is intrinsically active but has a highly restricted catalytic center.</text>
</comment>
<comment type="domain">
    <text evidence="1">The FAT domain forms three discontinuous subdomains of alpha-helical TPR repeats plus a single subdomain of HEAT repeats. The four domains pack sequentially to form a C-shaped a-solenoid that clamps onto the kinase domain (By similarity).</text>
</comment>
<comment type="PTM">
    <text evidence="1 20 34 40">Autophosphorylates when part of mTORC1 or mTORC2 (By similarity). Phosphorylation at Ser-1261, Ser-2159 and Thr-2164 promotes autophosphorylation (PubMed:19487463). Phosphorylated at Ser-2448 by RPS6KB1 (By similarity). Phosphorylation in the kinase domain modulates the interactions of MTOR with RPTOR and AKT1S1/PRAS40 and leads to increased intrinsic mTORC1 kinase activity (By similarity). Phosphorylation at Ser-2159 by TBK1 in response to growth factors and pathogen recognition receptors promotes mTORC1 activity (PubMed:29150432). Phosphorylation at Ser-2159 by TBK1 in response to EGF growth factor promotes mTORC2 activity, leading to AKT1 phosphorylation and activation (PubMed:34245780). Phosphorylation at Thr-2173 in the ATP-binding region by AKT1 strongly reduces kinase activity (By similarity).</text>
</comment>
<comment type="PTM">
    <text evidence="1">Ubiquitinated at Lys-2066 by the SCF(FBXO22) complex via 'Lys-27'-linked ubiquitination prevents mTORC1 substrate recruitment.</text>
</comment>
<comment type="disruption phenotype">
    <text evidence="10">Early embryonic lethality (PubMed:15485918). Embryonic development stops at 5.5 dpc and embryos are severely runted and display an aberrant developmental phenotype (PubMed:15485918). Embryos are able to implant due to a maternal mRNA contribution, which persists during preimplantation development (PubMed:15485918). Embryos display a lesion in inner cell mass proliferation, due to the inability to establish embryonic stem cells (PubMed:15485918).</text>
</comment>
<comment type="similarity">
    <text evidence="45">Belongs to the PI3/PI4-kinase family.</text>
</comment>
<feature type="chain" id="PRO_0000088809" description="Serine/threonine-protein kinase mTOR">
    <location>
        <begin position="1"/>
        <end position="2549"/>
    </location>
</feature>
<feature type="repeat" description="HEAT 1">
    <location>
        <begin position="16"/>
        <end position="53"/>
    </location>
</feature>
<feature type="repeat" description="HEAT 2">
    <location>
        <begin position="55"/>
        <end position="99"/>
    </location>
</feature>
<feature type="repeat" description="HEAT 3">
    <location>
        <begin position="100"/>
        <end position="137"/>
    </location>
</feature>
<feature type="repeat" description="HEAT 4">
    <location>
        <begin position="138"/>
        <end position="179"/>
    </location>
</feature>
<feature type="repeat" description="HEAT 5">
    <location>
        <begin position="180"/>
        <end position="220"/>
    </location>
</feature>
<feature type="repeat" description="HEAT 6">
    <location>
        <begin position="222"/>
        <end position="276"/>
    </location>
</feature>
<feature type="repeat" description="HEAT 7">
    <location>
        <begin position="277"/>
        <end position="313"/>
    </location>
</feature>
<feature type="repeat" description="HEAT 8">
    <location>
        <begin position="314"/>
        <end position="364"/>
    </location>
</feature>
<feature type="repeat" description="HEAT 9">
    <location>
        <begin position="365"/>
        <end position="409"/>
    </location>
</feature>
<feature type="repeat" description="HEAT 10">
    <location>
        <begin position="410"/>
        <end position="445"/>
    </location>
</feature>
<feature type="repeat" description="HEAT 11">
    <location>
        <begin position="446"/>
        <end position="494"/>
    </location>
</feature>
<feature type="repeat" description="HEAT 12">
    <location>
        <begin position="495"/>
        <end position="529"/>
    </location>
</feature>
<feature type="repeat" description="HEAT 13">
    <location>
        <begin position="530"/>
        <end position="563"/>
    </location>
</feature>
<feature type="repeat" description="HEAT 14">
    <location>
        <begin position="564"/>
        <end position="596"/>
    </location>
</feature>
<feature type="repeat" description="HEAT 15">
    <location>
        <begin position="597"/>
        <end position="636"/>
    </location>
</feature>
<feature type="repeat" description="HEAT 16">
    <location>
        <begin position="637"/>
        <end position="683"/>
    </location>
</feature>
<feature type="repeat" description="HEAT 17">
    <location>
        <begin position="686"/>
        <end position="724"/>
    </location>
</feature>
<feature type="repeat" description="HEAT 18">
    <location>
        <begin position="727"/>
        <end position="766"/>
    </location>
</feature>
<feature type="repeat" description="HEAT 19">
    <location>
        <begin position="769"/>
        <end position="811"/>
    </location>
</feature>
<feature type="repeat" description="HEAT 20">
    <location>
        <begin position="814"/>
        <end position="853"/>
    </location>
</feature>
<feature type="repeat" description="HEAT 21">
    <location>
        <begin position="857"/>
        <end position="893"/>
    </location>
</feature>
<feature type="repeat" description="HEAT 22">
    <location>
        <begin position="894"/>
        <end position="942"/>
    </location>
</feature>
<feature type="repeat" description="HEAT 23">
    <location>
        <begin position="943"/>
        <end position="988"/>
    </location>
</feature>
<feature type="repeat" description="HEAT 24">
    <location>
        <begin position="989"/>
        <end position="1027"/>
    </location>
</feature>
<feature type="repeat" description="HEAT 25">
    <location>
        <begin position="1029"/>
        <end position="1068"/>
    </location>
</feature>
<feature type="repeat" description="HEAT 26">
    <location>
        <begin position="1069"/>
        <end position="1105"/>
    </location>
</feature>
<feature type="repeat" description="HEAT 27">
    <location>
        <begin position="1106"/>
        <end position="1144"/>
    </location>
</feature>
<feature type="repeat" description="HEAT 28">
    <location>
        <begin position="1145"/>
        <end position="1188"/>
    </location>
</feature>
<feature type="repeat" description="HEAT 29">
    <location>
        <begin position="1189"/>
        <end position="1225"/>
    </location>
</feature>
<feature type="repeat" description="HEAT 30">
    <location>
        <begin position="1226"/>
        <end position="1273"/>
    </location>
</feature>
<feature type="repeat" description="HEAT 31">
    <location>
        <begin position="1274"/>
        <end position="1311"/>
    </location>
</feature>
<feature type="repeat" description="HEAT 32">
    <location>
        <begin position="1312"/>
        <end position="1345"/>
    </location>
</feature>
<feature type="repeat" description="TPR 1">
    <location>
        <begin position="1346"/>
        <end position="1382"/>
    </location>
</feature>
<feature type="domain" description="FAT" evidence="3">
    <location>
        <begin position="1382"/>
        <end position="1982"/>
    </location>
</feature>
<feature type="repeat" description="TPR 2">
    <location>
        <begin position="1383"/>
        <end position="1408"/>
    </location>
</feature>
<feature type="repeat" description="TPR 3">
    <location>
        <begin position="1409"/>
        <end position="1442"/>
    </location>
</feature>
<feature type="repeat" description="TPR 4">
    <location>
        <begin position="1443"/>
        <end position="1473"/>
    </location>
</feature>
<feature type="repeat" description="TPR 5">
    <location>
        <begin position="1474"/>
        <end position="1507"/>
    </location>
</feature>
<feature type="repeat" description="TPR 6">
    <location>
        <begin position="1508"/>
        <end position="1541"/>
    </location>
</feature>
<feature type="repeat" description="TPR 7">
    <location>
        <begin position="1542"/>
        <end position="1574"/>
    </location>
</feature>
<feature type="repeat" description="TPR 8">
    <location>
        <begin position="1575"/>
        <end position="1614"/>
    </location>
</feature>
<feature type="repeat" description="TPR 9">
    <location>
        <begin position="1615"/>
        <end position="1649"/>
    </location>
</feature>
<feature type="repeat" description="TPR 10">
    <location>
        <begin position="1650"/>
        <end position="1693"/>
    </location>
</feature>
<feature type="repeat" description="TPR 11">
    <location>
        <begin position="1694"/>
        <end position="1731"/>
    </location>
</feature>
<feature type="repeat" description="TPR 12">
    <location>
        <begin position="1732"/>
        <end position="1786"/>
    </location>
</feature>
<feature type="repeat" description="TPR 13">
    <location>
        <begin position="1787"/>
        <end position="1846"/>
    </location>
</feature>
<feature type="repeat" description="TPR 14">
    <location>
        <begin position="1898"/>
        <end position="1930"/>
    </location>
</feature>
<feature type="repeat" description="TPR 15">
    <location>
        <begin position="1931"/>
        <end position="1970"/>
    </location>
</feature>
<feature type="repeat" description="TPR 16">
    <location>
        <begin position="1971"/>
        <end position="2005"/>
    </location>
</feature>
<feature type="domain" description="PI3K/PI4K catalytic" evidence="2">
    <location>
        <begin position="2156"/>
        <end position="2469"/>
    </location>
</feature>
<feature type="domain" description="FATC" evidence="3 4">
    <location>
        <begin position="2517"/>
        <end position="2549"/>
    </location>
</feature>
<feature type="region of interest" description="Interaction with NBN" evidence="1">
    <location>
        <begin position="1"/>
        <end position="651"/>
    </location>
</feature>
<feature type="region of interest" description="Disordered" evidence="5">
    <location>
        <begin position="1825"/>
        <end position="1867"/>
    </location>
</feature>
<feature type="region of interest" description="Sufficient for interaction with the FKBP1A/rapamycin complex" evidence="42">
    <location>
        <begin position="2012"/>
        <end position="2144"/>
    </location>
</feature>
<feature type="region of interest" description="G-loop" evidence="2">
    <location>
        <begin position="2162"/>
        <end position="2168"/>
    </location>
</feature>
<feature type="region of interest" description="Interaction with MLST8" evidence="1">
    <location>
        <begin position="2258"/>
        <end position="2296"/>
    </location>
</feature>
<feature type="region of interest" description="Catalytic loop" evidence="2">
    <location>
        <begin position="2335"/>
        <end position="2343"/>
    </location>
</feature>
<feature type="region of interest" description="Activation loop" evidence="2">
    <location>
        <begin position="2355"/>
        <end position="2380"/>
    </location>
</feature>
<feature type="compositionally biased region" description="Low complexity" evidence="5">
    <location>
        <begin position="1825"/>
        <end position="1860"/>
    </location>
</feature>
<feature type="binding site" evidence="1">
    <location>
        <position position="1662"/>
    </location>
    <ligand>
        <name>1D-myo-inositol hexakisphosphate</name>
        <dbReference type="ChEBI" id="CHEBI:58130"/>
    </ligand>
</feature>
<feature type="binding site" evidence="1">
    <location>
        <position position="1702"/>
    </location>
    <ligand>
        <name>1D-myo-inositol hexakisphosphate</name>
        <dbReference type="ChEBI" id="CHEBI:58130"/>
    </ligand>
</feature>
<feature type="binding site" evidence="1">
    <location>
        <position position="1749"/>
    </location>
    <ligand>
        <name>1D-myo-inositol hexakisphosphate</name>
        <dbReference type="ChEBI" id="CHEBI:58130"/>
    </ligand>
</feature>
<feature type="binding site" evidence="1">
    <location>
        <position position="2165"/>
    </location>
    <ligand>
        <name>ATP</name>
        <dbReference type="ChEBI" id="CHEBI:30616"/>
    </ligand>
</feature>
<feature type="binding site" evidence="1">
    <location>
        <position position="2167"/>
    </location>
    <ligand>
        <name>ATP</name>
        <dbReference type="ChEBI" id="CHEBI:30616"/>
    </ligand>
</feature>
<feature type="binding site" evidence="1">
    <location>
        <position position="2185"/>
    </location>
    <ligand>
        <name>ATP</name>
        <dbReference type="ChEBI" id="CHEBI:30616"/>
    </ligand>
</feature>
<feature type="binding site" evidence="1">
    <location>
        <position position="2187"/>
    </location>
    <ligand>
        <name>ATP</name>
        <dbReference type="ChEBI" id="CHEBI:30616"/>
    </ligand>
</feature>
<feature type="binding site" evidence="1">
    <location>
        <position position="2190"/>
    </location>
    <ligand>
        <name>ATP</name>
        <dbReference type="ChEBI" id="CHEBI:30616"/>
    </ligand>
</feature>
<feature type="binding site" evidence="1">
    <location>
        <position position="2225"/>
    </location>
    <ligand>
        <name>ATP</name>
        <dbReference type="ChEBI" id="CHEBI:30616"/>
    </ligand>
</feature>
<feature type="binding site" evidence="1">
    <location>
        <position position="2238"/>
    </location>
    <ligand>
        <name>ATP</name>
        <dbReference type="ChEBI" id="CHEBI:30616"/>
    </ligand>
</feature>
<feature type="binding site" evidence="1">
    <location>
        <position position="2239"/>
    </location>
    <ligand>
        <name>ATP</name>
        <dbReference type="ChEBI" id="CHEBI:30616"/>
    </ligand>
</feature>
<feature type="binding site" evidence="1">
    <location>
        <position position="2240"/>
    </location>
    <ligand>
        <name>ATP</name>
        <dbReference type="ChEBI" id="CHEBI:30616"/>
    </ligand>
</feature>
<feature type="binding site" evidence="1">
    <location>
        <position position="2245"/>
    </location>
    <ligand>
        <name>ATP</name>
        <dbReference type="ChEBI" id="CHEBI:30616"/>
    </ligand>
</feature>
<feature type="binding site" evidence="1">
    <location>
        <position position="2343"/>
    </location>
    <ligand>
        <name>Mg(2+)</name>
        <dbReference type="ChEBI" id="CHEBI:18420"/>
        <label>1</label>
    </ligand>
</feature>
<feature type="binding site" evidence="1">
    <location>
        <position position="2345"/>
    </location>
    <ligand>
        <name>ATP</name>
        <dbReference type="ChEBI" id="CHEBI:30616"/>
    </ligand>
</feature>
<feature type="binding site" evidence="1">
    <location>
        <position position="2356"/>
    </location>
    <ligand>
        <name>ATP</name>
        <dbReference type="ChEBI" id="CHEBI:30616"/>
    </ligand>
</feature>
<feature type="binding site" evidence="1">
    <location>
        <position position="2357"/>
    </location>
    <ligand>
        <name>Mg(2+)</name>
        <dbReference type="ChEBI" id="CHEBI:18420"/>
        <label>1</label>
    </ligand>
</feature>
<feature type="modified residue" description="N-acetylmethionine" evidence="1">
    <location>
        <position position="1"/>
    </location>
</feature>
<feature type="modified residue" description="Phosphoserine" evidence="1">
    <location>
        <position position="567"/>
    </location>
</feature>
<feature type="modified residue" description="Phosphothreonine" evidence="1">
    <location>
        <position position="1162"/>
    </location>
</feature>
<feature type="modified residue" description="N6-acetyllysine" evidence="1">
    <location>
        <position position="1218"/>
    </location>
</feature>
<feature type="modified residue" description="Phosphoserine" evidence="20 48">
    <location>
        <position position="1261"/>
    </location>
</feature>
<feature type="modified residue" description="Phosphoserine; by TBK1" evidence="34 40">
    <location>
        <position position="2159"/>
    </location>
</feature>
<feature type="modified residue" description="Phosphothreonine" evidence="1">
    <location>
        <position position="2164"/>
    </location>
</feature>
<feature type="modified residue" description="Phosphothreonine; by PKB/AKT1" evidence="1">
    <location>
        <position position="2173"/>
    </location>
</feature>
<feature type="modified residue" description="Phosphothreonine; by RPS6KB1" evidence="8">
    <location>
        <position position="2446"/>
    </location>
</feature>
<feature type="modified residue" description="Phosphoserine; by RPS6KB1" evidence="8 30 32">
    <location>
        <position position="2448"/>
    </location>
</feature>
<feature type="modified residue" description="Phosphoserine" evidence="47 48">
    <location>
        <position position="2478"/>
    </location>
</feature>
<feature type="modified residue" description="Phosphoserine" evidence="47 48">
    <location>
        <position position="2481"/>
    </location>
</feature>
<feature type="cross-link" description="Glycyl lysine isopeptide (Lys-Gly) (interchain with G-Cter in ubiquitin)" evidence="1">
    <location>
        <position position="2066"/>
    </location>
</feature>
<feature type="splice variant" id="VSP_011909" description="In isoform 2." evidence="43">
    <original>HTFEEAEKGFDETLAKEKGMN</original>
    <variation>VRDGSTQPLAKHFGLESCSWP</variation>
    <location>
        <begin position="236"/>
        <end position="256"/>
    </location>
</feature>
<feature type="splice variant" id="VSP_011910" description="In isoform 2." evidence="43">
    <location>
        <begin position="257"/>
        <end position="2549"/>
    </location>
</feature>
<feature type="mutagenesis site" description="Abolishes interaction with the FKBP1A-rapamycin complex." evidence="42">
    <original>S</original>
    <variation>R</variation>
    <location>
        <position position="2035"/>
    </location>
</feature>
<feature type="mutagenesis site" description="Knockin macrophages display reduced mTORC1 activity. Knockin mice show decreased mTORC2 activity and ability to phosphorylate and activate AKT1." evidence="34 40">
    <original>S</original>
    <variation>A</variation>
    <location>
        <position position="2159"/>
    </location>
</feature>
<feature type="sequence conflict" description="In Ref. 3; AAH43920." evidence="45" ref="3">
    <original>N</original>
    <variation>K</variation>
    <location>
        <position position="33"/>
    </location>
</feature>
<feature type="sequence conflict" description="In Ref. 1; AAF73196." evidence="45" ref="1">
    <original>R</original>
    <variation>C</variation>
    <location>
        <position position="628"/>
    </location>
</feature>
<dbReference type="EC" id="2.7.11.1" evidence="6 16 17 25 33 37"/>
<dbReference type="EC" id="2.7.10.2" evidence="1"/>
<dbReference type="EMBL" id="AF152838">
    <property type="protein sequence ID" value="AAF73196.1"/>
    <property type="molecule type" value="mRNA"/>
</dbReference>
<dbReference type="EMBL" id="AL713995">
    <property type="status" value="NOT_ANNOTATED_CDS"/>
    <property type="molecule type" value="Genomic_DNA"/>
</dbReference>
<dbReference type="EMBL" id="AL731654">
    <property type="status" value="NOT_ANNOTATED_CDS"/>
    <property type="molecule type" value="Genomic_DNA"/>
</dbReference>
<dbReference type="EMBL" id="CU210865">
    <property type="status" value="NOT_ANNOTATED_CDS"/>
    <property type="molecule type" value="Genomic_DNA"/>
</dbReference>
<dbReference type="EMBL" id="BC043920">
    <property type="protein sequence ID" value="AAH43920.1"/>
    <property type="molecule type" value="mRNA"/>
</dbReference>
<dbReference type="EMBL" id="BC112904">
    <property type="protein sequence ID" value="AAI12905.1"/>
    <property type="molecule type" value="mRNA"/>
</dbReference>
<dbReference type="EMBL" id="AK012031">
    <property type="protein sequence ID" value="BAB27985.2"/>
    <property type="molecule type" value="mRNA"/>
</dbReference>
<dbReference type="CCDS" id="CCDS18937.1">
    <molecule id="Q9JLN9-1"/>
</dbReference>
<dbReference type="RefSeq" id="NP_064393.2">
    <molecule id="Q9JLN9-1"/>
    <property type="nucleotide sequence ID" value="NM_020009.2"/>
</dbReference>
<dbReference type="BMRB" id="Q9JLN9"/>
<dbReference type="SMR" id="Q9JLN9"/>
<dbReference type="BioGRID" id="208142">
    <property type="interactions" value="35"/>
</dbReference>
<dbReference type="ComplexPortal" id="CPX-4472">
    <property type="entry name" value="mTORC2 complex"/>
</dbReference>
<dbReference type="ComplexPortal" id="CPX-4473">
    <property type="entry name" value="mTORC1 complex"/>
</dbReference>
<dbReference type="CORUM" id="Q9JLN9"/>
<dbReference type="DIP" id="DIP-40570N"/>
<dbReference type="FunCoup" id="Q9JLN9">
    <property type="interactions" value="3795"/>
</dbReference>
<dbReference type="IntAct" id="Q9JLN9">
    <property type="interactions" value="24"/>
</dbReference>
<dbReference type="MINT" id="Q9JLN9"/>
<dbReference type="STRING" id="10090.ENSMUSP00000099510"/>
<dbReference type="BindingDB" id="Q9JLN9"/>
<dbReference type="ChEMBL" id="CHEMBL1255165"/>
<dbReference type="DrugCentral" id="Q9JLN9"/>
<dbReference type="GlyGen" id="Q9JLN9">
    <property type="glycosylation" value="4 sites, 1 N-linked glycan (1 site), 1 O-linked glycan (1 site)"/>
</dbReference>
<dbReference type="iPTMnet" id="Q9JLN9"/>
<dbReference type="PhosphoSitePlus" id="Q9JLN9"/>
<dbReference type="SwissPalm" id="Q9JLN9"/>
<dbReference type="jPOST" id="Q9JLN9"/>
<dbReference type="PaxDb" id="10090-ENSMUSP00000099510"/>
<dbReference type="PeptideAtlas" id="Q9JLN9"/>
<dbReference type="ProteomicsDB" id="287515">
    <molecule id="Q9JLN9-1"/>
</dbReference>
<dbReference type="ProteomicsDB" id="287516">
    <molecule id="Q9JLN9-2"/>
</dbReference>
<dbReference type="Pumba" id="Q9JLN9"/>
<dbReference type="Antibodypedia" id="3566">
    <property type="antibodies" value="1822 antibodies from 53 providers"/>
</dbReference>
<dbReference type="DNASU" id="56717"/>
<dbReference type="Ensembl" id="ENSMUST00000057580.8">
    <molecule id="Q9JLN9-2"/>
    <property type="protein sequence ID" value="ENSMUSP00000054164.8"/>
    <property type="gene ID" value="ENSMUSG00000028991.16"/>
</dbReference>
<dbReference type="Ensembl" id="ENSMUST00000103221.10">
    <molecule id="Q9JLN9-1"/>
    <property type="protein sequence ID" value="ENSMUSP00000099510.4"/>
    <property type="gene ID" value="ENSMUSG00000028991.16"/>
</dbReference>
<dbReference type="GeneID" id="56717"/>
<dbReference type="KEGG" id="mmu:56717"/>
<dbReference type="UCSC" id="uc008vuq.3">
    <molecule id="Q9JLN9-2"/>
    <property type="organism name" value="mouse"/>
</dbReference>
<dbReference type="UCSC" id="uc008vur.2">
    <molecule id="Q9JLN9-1"/>
    <property type="organism name" value="mouse"/>
</dbReference>
<dbReference type="AGR" id="MGI:1928394"/>
<dbReference type="CTD" id="2475"/>
<dbReference type="MGI" id="MGI:1928394">
    <property type="gene designation" value="Mtor"/>
</dbReference>
<dbReference type="VEuPathDB" id="HostDB:ENSMUSG00000028991"/>
<dbReference type="eggNOG" id="KOG0891">
    <property type="taxonomic scope" value="Eukaryota"/>
</dbReference>
<dbReference type="GeneTree" id="ENSGT00930000151037"/>
<dbReference type="HOGENOM" id="CLU_000178_7_1_1"/>
<dbReference type="InParanoid" id="Q9JLN9"/>
<dbReference type="OMA" id="MRQHSAK"/>
<dbReference type="OrthoDB" id="2250022at2759"/>
<dbReference type="PhylomeDB" id="Q9JLN9"/>
<dbReference type="TreeFam" id="TF105134"/>
<dbReference type="Reactome" id="R-MMU-1257604">
    <property type="pathway name" value="PIP3 activates AKT signaling"/>
</dbReference>
<dbReference type="Reactome" id="R-MMU-1632852">
    <property type="pathway name" value="Macroautophagy"/>
</dbReference>
<dbReference type="Reactome" id="R-MMU-165159">
    <property type="pathway name" value="MTOR signalling"/>
</dbReference>
<dbReference type="Reactome" id="R-MMU-166208">
    <property type="pathway name" value="mTORC1-mediated signalling"/>
</dbReference>
<dbReference type="Reactome" id="R-MMU-3371571">
    <property type="pathway name" value="HSF1-dependent transactivation"/>
</dbReference>
<dbReference type="Reactome" id="R-MMU-380972">
    <property type="pathway name" value="Energy dependent regulation of mTOR by LKB1-AMPK"/>
</dbReference>
<dbReference type="Reactome" id="R-MMU-389357">
    <property type="pathway name" value="CD28 dependent PI3K/Akt signaling"/>
</dbReference>
<dbReference type="Reactome" id="R-MMU-5218920">
    <property type="pathway name" value="VEGFR2 mediated vascular permeability"/>
</dbReference>
<dbReference type="Reactome" id="R-MMU-5628897">
    <property type="pathway name" value="TP53 Regulates Metabolic Genes"/>
</dbReference>
<dbReference type="Reactome" id="R-MMU-6804757">
    <property type="pathway name" value="Regulation of TP53 Degradation"/>
</dbReference>
<dbReference type="Reactome" id="R-MMU-8943724">
    <property type="pathway name" value="Regulation of PTEN gene transcription"/>
</dbReference>
<dbReference type="Reactome" id="R-MMU-9639288">
    <property type="pathway name" value="Amino acids regulate mTORC1"/>
</dbReference>
<dbReference type="Reactome" id="R-MMU-9856530">
    <property type="pathway name" value="High laminar flow shear stress activates signaling by PIEZO1 and PECAM1:CDH5:KDR in endothelial cells"/>
</dbReference>
<dbReference type="BioGRID-ORCS" id="56717">
    <property type="hits" value="39 hits in 118 CRISPR screens"/>
</dbReference>
<dbReference type="ChiTaRS" id="Mtor">
    <property type="organism name" value="mouse"/>
</dbReference>
<dbReference type="PRO" id="PR:Q9JLN9"/>
<dbReference type="Proteomes" id="UP000000589">
    <property type="component" value="Chromosome 4"/>
</dbReference>
<dbReference type="RNAct" id="Q9JLN9">
    <property type="molecule type" value="protein"/>
</dbReference>
<dbReference type="Bgee" id="ENSMUSG00000028991">
    <property type="expression patterns" value="Expressed in spermatid and 99 other cell types or tissues"/>
</dbReference>
<dbReference type="GO" id="GO:0005737">
    <property type="term" value="C:cytoplasm"/>
    <property type="evidence" value="ECO:0000250"/>
    <property type="project" value="UniProtKB"/>
</dbReference>
<dbReference type="GO" id="GO:0005829">
    <property type="term" value="C:cytosol"/>
    <property type="evidence" value="ECO:0000314"/>
    <property type="project" value="UniProtKB"/>
</dbReference>
<dbReference type="GO" id="GO:0030425">
    <property type="term" value="C:dendrite"/>
    <property type="evidence" value="ECO:0000314"/>
    <property type="project" value="MGI"/>
</dbReference>
<dbReference type="GO" id="GO:0005783">
    <property type="term" value="C:endoplasmic reticulum"/>
    <property type="evidence" value="ECO:0000250"/>
    <property type="project" value="UniProtKB"/>
</dbReference>
<dbReference type="GO" id="GO:0005789">
    <property type="term" value="C:endoplasmic reticulum membrane"/>
    <property type="evidence" value="ECO:0007669"/>
    <property type="project" value="UniProtKB-SubCell"/>
</dbReference>
<dbReference type="GO" id="GO:0000139">
    <property type="term" value="C:Golgi membrane"/>
    <property type="evidence" value="ECO:0007669"/>
    <property type="project" value="UniProtKB-SubCell"/>
</dbReference>
<dbReference type="GO" id="GO:0005765">
    <property type="term" value="C:lysosomal membrane"/>
    <property type="evidence" value="ECO:0000250"/>
    <property type="project" value="UniProtKB"/>
</dbReference>
<dbReference type="GO" id="GO:0005764">
    <property type="term" value="C:lysosome"/>
    <property type="evidence" value="ECO:0000250"/>
    <property type="project" value="UniProtKB"/>
</dbReference>
<dbReference type="GO" id="GO:0005741">
    <property type="term" value="C:mitochondrial outer membrane"/>
    <property type="evidence" value="ECO:0007669"/>
    <property type="project" value="UniProtKB-SubCell"/>
</dbReference>
<dbReference type="GO" id="GO:0005635">
    <property type="term" value="C:nuclear envelope"/>
    <property type="evidence" value="ECO:0007669"/>
    <property type="project" value="Ensembl"/>
</dbReference>
<dbReference type="GO" id="GO:0005634">
    <property type="term" value="C:nucleus"/>
    <property type="evidence" value="ECO:0000314"/>
    <property type="project" value="MGI"/>
</dbReference>
<dbReference type="GO" id="GO:0045335">
    <property type="term" value="C:phagocytic vesicle"/>
    <property type="evidence" value="ECO:0000250"/>
    <property type="project" value="UniProtKB"/>
</dbReference>
<dbReference type="GO" id="GO:0005886">
    <property type="term" value="C:plasma membrane"/>
    <property type="evidence" value="ECO:0000250"/>
    <property type="project" value="UniProtKB"/>
</dbReference>
<dbReference type="GO" id="GO:0016605">
    <property type="term" value="C:PML body"/>
    <property type="evidence" value="ECO:0007669"/>
    <property type="project" value="UniProtKB-SubCell"/>
</dbReference>
<dbReference type="GO" id="GO:1902554">
    <property type="term" value="C:serine/threonine protein kinase complex"/>
    <property type="evidence" value="ECO:0007669"/>
    <property type="project" value="Ensembl"/>
</dbReference>
<dbReference type="GO" id="GO:0031931">
    <property type="term" value="C:TORC1 complex"/>
    <property type="evidence" value="ECO:0000314"/>
    <property type="project" value="WormBase"/>
</dbReference>
<dbReference type="GO" id="GO:0031932">
    <property type="term" value="C:TORC2 complex"/>
    <property type="evidence" value="ECO:0000314"/>
    <property type="project" value="UniProtKB"/>
</dbReference>
<dbReference type="GO" id="GO:0005524">
    <property type="term" value="F:ATP binding"/>
    <property type="evidence" value="ECO:0007669"/>
    <property type="project" value="UniProtKB-KW"/>
</dbReference>
<dbReference type="GO" id="GO:0042802">
    <property type="term" value="F:identical protein binding"/>
    <property type="evidence" value="ECO:0007669"/>
    <property type="project" value="Ensembl"/>
</dbReference>
<dbReference type="GO" id="GO:0000822">
    <property type="term" value="F:inositol hexakisphosphate binding"/>
    <property type="evidence" value="ECO:0000250"/>
    <property type="project" value="UniProtKB"/>
</dbReference>
<dbReference type="GO" id="GO:0046872">
    <property type="term" value="F:metal ion binding"/>
    <property type="evidence" value="ECO:0007669"/>
    <property type="project" value="UniProtKB-KW"/>
</dbReference>
<dbReference type="GO" id="GO:0051219">
    <property type="term" value="F:phosphoprotein binding"/>
    <property type="evidence" value="ECO:0007669"/>
    <property type="project" value="Ensembl"/>
</dbReference>
<dbReference type="GO" id="GO:0106310">
    <property type="term" value="F:protein serine kinase activity"/>
    <property type="evidence" value="ECO:0007669"/>
    <property type="project" value="RHEA"/>
</dbReference>
<dbReference type="GO" id="GO:0004674">
    <property type="term" value="F:protein serine/threonine kinase activity"/>
    <property type="evidence" value="ECO:0000314"/>
    <property type="project" value="UniProtKB"/>
</dbReference>
<dbReference type="GO" id="GO:0004713">
    <property type="term" value="F:protein tyrosine kinase activity"/>
    <property type="evidence" value="ECO:0007669"/>
    <property type="project" value="Ensembl"/>
</dbReference>
<dbReference type="GO" id="GO:0043022">
    <property type="term" value="F:ribosome binding"/>
    <property type="evidence" value="ECO:0000314"/>
    <property type="project" value="UniProtKB"/>
</dbReference>
<dbReference type="GO" id="GO:0001002">
    <property type="term" value="F:RNA polymerase III type 1 promoter sequence-specific DNA binding"/>
    <property type="evidence" value="ECO:0007669"/>
    <property type="project" value="Ensembl"/>
</dbReference>
<dbReference type="GO" id="GO:0001003">
    <property type="term" value="F:RNA polymerase III type 2 promoter sequence-specific DNA binding"/>
    <property type="evidence" value="ECO:0007669"/>
    <property type="project" value="Ensembl"/>
</dbReference>
<dbReference type="GO" id="GO:0001006">
    <property type="term" value="F:RNA polymerase III type 3 promoter sequence-specific DNA binding"/>
    <property type="evidence" value="ECO:0007669"/>
    <property type="project" value="Ensembl"/>
</dbReference>
<dbReference type="GO" id="GO:0001156">
    <property type="term" value="F:TFIIIC-class transcription factor complex binding"/>
    <property type="evidence" value="ECO:0007669"/>
    <property type="project" value="Ensembl"/>
</dbReference>
<dbReference type="GO" id="GO:0044325">
    <property type="term" value="F:transmembrane transporter binding"/>
    <property type="evidence" value="ECO:0000353"/>
    <property type="project" value="ARUK-UCL"/>
</dbReference>
<dbReference type="GO" id="GO:0006207">
    <property type="term" value="P:'de novo' pyrimidine nucleobase biosynthetic process"/>
    <property type="evidence" value="ECO:0000314"/>
    <property type="project" value="CACAO"/>
</dbReference>
<dbReference type="GO" id="GO:0048266">
    <property type="term" value="P:behavioral response to pain"/>
    <property type="evidence" value="ECO:0000316"/>
    <property type="project" value="MGI"/>
</dbReference>
<dbReference type="GO" id="GO:0033173">
    <property type="term" value="P:calcineurin-NFAT signaling cascade"/>
    <property type="evidence" value="ECO:0000315"/>
    <property type="project" value="MGI"/>
</dbReference>
<dbReference type="GO" id="GO:0055006">
    <property type="term" value="P:cardiac cell development"/>
    <property type="evidence" value="ECO:0000315"/>
    <property type="project" value="CACAO"/>
</dbReference>
<dbReference type="GO" id="GO:0055013">
    <property type="term" value="P:cardiac muscle cell development"/>
    <property type="evidence" value="ECO:0000315"/>
    <property type="project" value="MGI"/>
</dbReference>
<dbReference type="GO" id="GO:0060048">
    <property type="term" value="P:cardiac muscle contraction"/>
    <property type="evidence" value="ECO:0000315"/>
    <property type="project" value="MGI"/>
</dbReference>
<dbReference type="GO" id="GO:0048738">
    <property type="term" value="P:cardiac muscle tissue development"/>
    <property type="evidence" value="ECO:0000315"/>
    <property type="project" value="MGI"/>
</dbReference>
<dbReference type="GO" id="GO:0030030">
    <property type="term" value="P:cell projection organization"/>
    <property type="evidence" value="ECO:0000315"/>
    <property type="project" value="MGI"/>
</dbReference>
<dbReference type="GO" id="GO:0034198">
    <property type="term" value="P:cellular response to amino acid starvation"/>
    <property type="evidence" value="ECO:0000250"/>
    <property type="project" value="UniProtKB"/>
</dbReference>
<dbReference type="GO" id="GO:0071456">
    <property type="term" value="P:cellular response to hypoxia"/>
    <property type="evidence" value="ECO:0000314"/>
    <property type="project" value="UniProtKB"/>
</dbReference>
<dbReference type="GO" id="GO:0032869">
    <property type="term" value="P:cellular response to insulin stimulus"/>
    <property type="evidence" value="ECO:0000314"/>
    <property type="project" value="UniProtKB"/>
</dbReference>
<dbReference type="GO" id="GO:0071233">
    <property type="term" value="P:cellular response to L-leucine"/>
    <property type="evidence" value="ECO:0007669"/>
    <property type="project" value="Ensembl"/>
</dbReference>
<dbReference type="GO" id="GO:1990253">
    <property type="term" value="P:cellular response to leucine starvation"/>
    <property type="evidence" value="ECO:0007669"/>
    <property type="project" value="Ensembl"/>
</dbReference>
<dbReference type="GO" id="GO:0061431">
    <property type="term" value="P:cellular response to methionine"/>
    <property type="evidence" value="ECO:0007669"/>
    <property type="project" value="Ensembl"/>
</dbReference>
<dbReference type="GO" id="GO:0031669">
    <property type="term" value="P:cellular response to nutrient levels"/>
    <property type="evidence" value="ECO:0000314"/>
    <property type="project" value="UniProtKB"/>
</dbReference>
<dbReference type="GO" id="GO:0071470">
    <property type="term" value="P:cellular response to osmotic stress"/>
    <property type="evidence" value="ECO:0000303"/>
    <property type="project" value="ComplexPortal"/>
</dbReference>
<dbReference type="GO" id="GO:0007010">
    <property type="term" value="P:cytoskeleton organization"/>
    <property type="evidence" value="ECO:0000303"/>
    <property type="project" value="ComplexPortal"/>
</dbReference>
<dbReference type="GO" id="GO:0006974">
    <property type="term" value="P:DNA damage response"/>
    <property type="evidence" value="ECO:0000303"/>
    <property type="project" value="ComplexPortal"/>
</dbReference>
<dbReference type="GO" id="GO:0006112">
    <property type="term" value="P:energy reserve metabolic process"/>
    <property type="evidence" value="ECO:0000315"/>
    <property type="project" value="MGI"/>
</dbReference>
<dbReference type="GO" id="GO:0007281">
    <property type="term" value="P:germ cell development"/>
    <property type="evidence" value="ECO:0000314"/>
    <property type="project" value="MGI"/>
</dbReference>
<dbReference type="GO" id="GO:0003007">
    <property type="term" value="P:heart morphogenesis"/>
    <property type="evidence" value="ECO:0000315"/>
    <property type="project" value="MGI"/>
</dbReference>
<dbReference type="GO" id="GO:0003179">
    <property type="term" value="P:heart valve morphogenesis"/>
    <property type="evidence" value="ECO:0000315"/>
    <property type="project" value="MGI"/>
</dbReference>
<dbReference type="GO" id="GO:0006954">
    <property type="term" value="P:inflammatory response"/>
    <property type="evidence" value="ECO:0000316"/>
    <property type="project" value="MGI"/>
</dbReference>
<dbReference type="GO" id="GO:0016236">
    <property type="term" value="P:macroautophagy"/>
    <property type="evidence" value="ECO:0000315"/>
    <property type="project" value="MGI"/>
</dbReference>
<dbReference type="GO" id="GO:0035264">
    <property type="term" value="P:multicellular organism growth"/>
    <property type="evidence" value="ECO:0000315"/>
    <property type="project" value="MGI"/>
</dbReference>
<dbReference type="GO" id="GO:0043066">
    <property type="term" value="P:negative regulation of apoptotic process"/>
    <property type="evidence" value="ECO:0000303"/>
    <property type="project" value="ComplexPortal"/>
</dbReference>
<dbReference type="GO" id="GO:0010507">
    <property type="term" value="P:negative regulation of autophagy"/>
    <property type="evidence" value="ECO:0000315"/>
    <property type="project" value="UniProtKB"/>
</dbReference>
<dbReference type="GO" id="GO:0070885">
    <property type="term" value="P:negative regulation of calcineurin-NFAT signaling cascade"/>
    <property type="evidence" value="ECO:0000315"/>
    <property type="project" value="MGI"/>
</dbReference>
<dbReference type="GO" id="GO:0045792">
    <property type="term" value="P:negative regulation of cell size"/>
    <property type="evidence" value="ECO:0000316"/>
    <property type="project" value="MGI"/>
</dbReference>
<dbReference type="GO" id="GO:1905672">
    <property type="term" value="P:negative regulation of lysosome organization"/>
    <property type="evidence" value="ECO:0000250"/>
    <property type="project" value="UniProtKB"/>
</dbReference>
<dbReference type="GO" id="GO:0016242">
    <property type="term" value="P:negative regulation of macroautophagy"/>
    <property type="evidence" value="ECO:0000315"/>
    <property type="project" value="MGI"/>
</dbReference>
<dbReference type="GO" id="GO:1900181">
    <property type="term" value="P:negative regulation of protein localization to nucleus"/>
    <property type="evidence" value="ECO:0000250"/>
    <property type="project" value="UniProtKB"/>
</dbReference>
<dbReference type="GO" id="GO:0019228">
    <property type="term" value="P:neuronal action potential"/>
    <property type="evidence" value="ECO:0000316"/>
    <property type="project" value="MGI"/>
</dbReference>
<dbReference type="GO" id="GO:0048709">
    <property type="term" value="P:oligodendrocyte differentiation"/>
    <property type="evidence" value="ECO:0000315"/>
    <property type="project" value="MGI"/>
</dbReference>
<dbReference type="GO" id="GO:0030838">
    <property type="term" value="P:positive regulation of actin filament polymerization"/>
    <property type="evidence" value="ECO:0000314"/>
    <property type="project" value="MGI"/>
</dbReference>
<dbReference type="GO" id="GO:0030307">
    <property type="term" value="P:positive regulation of cell growth"/>
    <property type="evidence" value="ECO:0000303"/>
    <property type="project" value="ComplexPortal"/>
</dbReference>
<dbReference type="GO" id="GO:0010718">
    <property type="term" value="P:positive regulation of epithelial to mesenchymal transition"/>
    <property type="evidence" value="ECO:0007669"/>
    <property type="project" value="Ensembl"/>
</dbReference>
<dbReference type="GO" id="GO:0045821">
    <property type="term" value="P:positive regulation of glycolytic process"/>
    <property type="evidence" value="ECO:0000303"/>
    <property type="project" value="ComplexPortal"/>
</dbReference>
<dbReference type="GO" id="GO:0051549">
    <property type="term" value="P:positive regulation of keratinocyte migration"/>
    <property type="evidence" value="ECO:0007669"/>
    <property type="project" value="Ensembl"/>
</dbReference>
<dbReference type="GO" id="GO:0010592">
    <property type="term" value="P:positive regulation of lamellipodium assembly"/>
    <property type="evidence" value="ECO:0000314"/>
    <property type="project" value="MGI"/>
</dbReference>
<dbReference type="GO" id="GO:0046889">
    <property type="term" value="P:positive regulation of lipid biosynthetic process"/>
    <property type="evidence" value="ECO:0000314"/>
    <property type="project" value="UniProtKB"/>
</dbReference>
<dbReference type="GO" id="GO:0010831">
    <property type="term" value="P:positive regulation of myotube differentiation"/>
    <property type="evidence" value="ECO:0000316"/>
    <property type="project" value="MGI"/>
</dbReference>
<dbReference type="GO" id="GO:0048714">
    <property type="term" value="P:positive regulation of oligodendrocyte differentiation"/>
    <property type="evidence" value="ECO:0000315"/>
    <property type="project" value="MGI"/>
</dbReference>
<dbReference type="GO" id="GO:1905857">
    <property type="term" value="P:positive regulation of pentose-phosphate shunt"/>
    <property type="evidence" value="ECO:0000303"/>
    <property type="project" value="ComplexPortal"/>
</dbReference>
<dbReference type="GO" id="GO:0051496">
    <property type="term" value="P:positive regulation of stress fiber assembly"/>
    <property type="evidence" value="ECO:0000314"/>
    <property type="project" value="MGI"/>
</dbReference>
<dbReference type="GO" id="GO:0045945">
    <property type="term" value="P:positive regulation of transcription by RNA polymerase III"/>
    <property type="evidence" value="ECO:0007669"/>
    <property type="project" value="Ensembl"/>
</dbReference>
<dbReference type="GO" id="GO:1901838">
    <property type="term" value="P:positive regulation of transcription of nucleolar large rRNA by RNA polymerase I"/>
    <property type="evidence" value="ECO:0007669"/>
    <property type="project" value="Ensembl"/>
</dbReference>
<dbReference type="GO" id="GO:0045948">
    <property type="term" value="P:positive regulation of translational initiation"/>
    <property type="evidence" value="ECO:0007669"/>
    <property type="project" value="Ensembl"/>
</dbReference>
<dbReference type="GO" id="GO:2000060">
    <property type="term" value="P:positive regulation of ubiquitin-dependent protein catabolic process"/>
    <property type="evidence" value="ECO:0000250"/>
    <property type="project" value="UniProtKB"/>
</dbReference>
<dbReference type="GO" id="GO:1903691">
    <property type="term" value="P:positive regulation of wound healing, spreading of epidermal cells"/>
    <property type="evidence" value="ECO:0007669"/>
    <property type="project" value="Ensembl"/>
</dbReference>
<dbReference type="GO" id="GO:0009791">
    <property type="term" value="P:post-embryonic development"/>
    <property type="evidence" value="ECO:0000315"/>
    <property type="project" value="MGI"/>
</dbReference>
<dbReference type="GO" id="GO:0031648">
    <property type="term" value="P:protein destabilization"/>
    <property type="evidence" value="ECO:0007669"/>
    <property type="project" value="Ensembl"/>
</dbReference>
<dbReference type="GO" id="GO:2000785">
    <property type="term" value="P:regulation of autophagosome assembly"/>
    <property type="evidence" value="ECO:0007669"/>
    <property type="project" value="Ensembl"/>
</dbReference>
<dbReference type="GO" id="GO:0010506">
    <property type="term" value="P:regulation of autophagy"/>
    <property type="evidence" value="ECO:0000314"/>
    <property type="project" value="UniProtKB"/>
</dbReference>
<dbReference type="GO" id="GO:0042752">
    <property type="term" value="P:regulation of circadian rhythm"/>
    <property type="evidence" value="ECO:0000315"/>
    <property type="project" value="UniProtKB"/>
</dbReference>
<dbReference type="GO" id="GO:1904059">
    <property type="term" value="P:regulation of locomotor rhythm"/>
    <property type="evidence" value="ECO:0000315"/>
    <property type="project" value="UniProtKB"/>
</dbReference>
<dbReference type="GO" id="GO:1905671">
    <property type="term" value="P:regulation of lysosome organization"/>
    <property type="evidence" value="ECO:0000250"/>
    <property type="project" value="UniProtKB"/>
</dbReference>
<dbReference type="GO" id="GO:0090559">
    <property type="term" value="P:regulation of membrane permeability"/>
    <property type="evidence" value="ECO:0000315"/>
    <property type="project" value="MGI"/>
</dbReference>
<dbReference type="GO" id="GO:0031641">
    <property type="term" value="P:regulation of myelination"/>
    <property type="evidence" value="ECO:0000315"/>
    <property type="project" value="MGI"/>
</dbReference>
<dbReference type="GO" id="GO:0045670">
    <property type="term" value="P:regulation of osteoclast differentiation"/>
    <property type="evidence" value="ECO:0000314"/>
    <property type="project" value="UniProtKB"/>
</dbReference>
<dbReference type="GO" id="GO:0051896">
    <property type="term" value="P:regulation of phosphatidylinositol 3-kinase/protein kinase B signal transduction"/>
    <property type="evidence" value="ECO:0000314"/>
    <property type="project" value="UniProtKB"/>
</dbReference>
<dbReference type="GO" id="GO:0043200">
    <property type="term" value="P:response to amino acid"/>
    <property type="evidence" value="ECO:0000314"/>
    <property type="project" value="MGI"/>
</dbReference>
<dbReference type="GO" id="GO:0009408">
    <property type="term" value="P:response to heat"/>
    <property type="evidence" value="ECO:0000316"/>
    <property type="project" value="MGI"/>
</dbReference>
<dbReference type="GO" id="GO:0032868">
    <property type="term" value="P:response to insulin"/>
    <property type="evidence" value="ECO:0000314"/>
    <property type="project" value="MGI"/>
</dbReference>
<dbReference type="GO" id="GO:0009615">
    <property type="term" value="P:response to virus"/>
    <property type="evidence" value="ECO:0000314"/>
    <property type="project" value="MGI"/>
</dbReference>
<dbReference type="GO" id="GO:0031529">
    <property type="term" value="P:ruffle organization"/>
    <property type="evidence" value="ECO:0000314"/>
    <property type="project" value="MGI"/>
</dbReference>
<dbReference type="GO" id="GO:0002296">
    <property type="term" value="P:T-helper 1 cell lineage commitment"/>
    <property type="evidence" value="ECO:0000315"/>
    <property type="project" value="MGI"/>
</dbReference>
<dbReference type="GO" id="GO:0031929">
    <property type="term" value="P:TOR signaling"/>
    <property type="evidence" value="ECO:0000315"/>
    <property type="project" value="UniProtKB"/>
</dbReference>
<dbReference type="GO" id="GO:0038202">
    <property type="term" value="P:TORC1 signaling"/>
    <property type="evidence" value="ECO:0000250"/>
    <property type="project" value="UniProtKB"/>
</dbReference>
<dbReference type="GO" id="GO:0038203">
    <property type="term" value="P:TORC2 signaling"/>
    <property type="evidence" value="ECO:0000314"/>
    <property type="project" value="UniProtKB"/>
</dbReference>
<dbReference type="GO" id="GO:0050882">
    <property type="term" value="P:voluntary musculoskeletal movement"/>
    <property type="evidence" value="ECO:0000315"/>
    <property type="project" value="MGI"/>
</dbReference>
<dbReference type="CDD" id="cd05169">
    <property type="entry name" value="PIKKc_TOR"/>
    <property type="match status" value="1"/>
</dbReference>
<dbReference type="FunFam" id="1.10.1070.11:FF:000074">
    <property type="entry name" value="DJ576K7.1 (FK506 binding protein 12-rapamycin associated protein 1)"/>
    <property type="match status" value="1"/>
</dbReference>
<dbReference type="FunFam" id="1.10.1070.11:FF:000058">
    <property type="entry name" value="MTOR isoform 6"/>
    <property type="match status" value="1"/>
</dbReference>
<dbReference type="FunFam" id="1.25.10.10:FF:000060">
    <property type="entry name" value="Serine/threonine-protein kinase mTOR"/>
    <property type="match status" value="1"/>
</dbReference>
<dbReference type="FunFam" id="1.25.10.10:FF:000094">
    <property type="entry name" value="Serine/threonine-protein kinase mTOR"/>
    <property type="match status" value="1"/>
</dbReference>
<dbReference type="FunFam" id="1.25.10.10:FF:000532">
    <property type="entry name" value="Serine/threonine-protein kinase mTOR"/>
    <property type="match status" value="1"/>
</dbReference>
<dbReference type="FunFam" id="1.20.120.150:FF:000001">
    <property type="entry name" value="Serine/threonine-protein kinase TOR"/>
    <property type="match status" value="1"/>
</dbReference>
<dbReference type="FunFam" id="1.25.10.10:FF:000083">
    <property type="entry name" value="Serine/threonine-protein kinase TOR"/>
    <property type="match status" value="1"/>
</dbReference>
<dbReference type="FunFam" id="3.30.1010.10:FF:000004">
    <property type="entry name" value="Serine/threonine-protein kinase TOR"/>
    <property type="match status" value="1"/>
</dbReference>
<dbReference type="Gene3D" id="1.20.120.150">
    <property type="entry name" value="FKBP12-rapamycin binding domain"/>
    <property type="match status" value="1"/>
</dbReference>
<dbReference type="Gene3D" id="1.25.10.10">
    <property type="entry name" value="Leucine-rich Repeat Variant"/>
    <property type="match status" value="4"/>
</dbReference>
<dbReference type="Gene3D" id="1.10.1070.11">
    <property type="entry name" value="Phosphatidylinositol 3-/4-kinase, catalytic domain"/>
    <property type="match status" value="1"/>
</dbReference>
<dbReference type="Gene3D" id="3.30.1010.10">
    <property type="entry name" value="Phosphatidylinositol 3-kinase Catalytic Subunit, Chain A, domain 4"/>
    <property type="match status" value="1"/>
</dbReference>
<dbReference type="Gene3D" id="1.25.40.10">
    <property type="entry name" value="Tetratricopeptide repeat domain"/>
    <property type="match status" value="1"/>
</dbReference>
<dbReference type="InterPro" id="IPR011989">
    <property type="entry name" value="ARM-like"/>
</dbReference>
<dbReference type="InterPro" id="IPR016024">
    <property type="entry name" value="ARM-type_fold"/>
</dbReference>
<dbReference type="InterPro" id="IPR050517">
    <property type="entry name" value="DDR_Repair_Kinase"/>
</dbReference>
<dbReference type="InterPro" id="IPR003152">
    <property type="entry name" value="FATC_dom"/>
</dbReference>
<dbReference type="InterPro" id="IPR009076">
    <property type="entry name" value="FRB_dom"/>
</dbReference>
<dbReference type="InterPro" id="IPR036738">
    <property type="entry name" value="FRB_sf"/>
</dbReference>
<dbReference type="InterPro" id="IPR011009">
    <property type="entry name" value="Kinase-like_dom_sf"/>
</dbReference>
<dbReference type="InterPro" id="IPR024585">
    <property type="entry name" value="mTOR_dom"/>
</dbReference>
<dbReference type="InterPro" id="IPR000403">
    <property type="entry name" value="PI3/4_kinase_cat_dom"/>
</dbReference>
<dbReference type="InterPro" id="IPR036940">
    <property type="entry name" value="PI3/4_kinase_cat_sf"/>
</dbReference>
<dbReference type="InterPro" id="IPR018936">
    <property type="entry name" value="PI3/4_kinase_CS"/>
</dbReference>
<dbReference type="InterPro" id="IPR003151">
    <property type="entry name" value="PIK-rel_kinase_FAT"/>
</dbReference>
<dbReference type="InterPro" id="IPR014009">
    <property type="entry name" value="PIK_FAT"/>
</dbReference>
<dbReference type="InterPro" id="IPR026683">
    <property type="entry name" value="TOR_cat"/>
</dbReference>
<dbReference type="InterPro" id="IPR011990">
    <property type="entry name" value="TPR-like_helical_dom_sf"/>
</dbReference>
<dbReference type="PANTHER" id="PTHR11139">
    <property type="entry name" value="ATAXIA TELANGIECTASIA MUTATED ATM -RELATED"/>
    <property type="match status" value="1"/>
</dbReference>
<dbReference type="PANTHER" id="PTHR11139:SF9">
    <property type="entry name" value="SERINE_THREONINE-PROTEIN KINASE MTOR"/>
    <property type="match status" value="1"/>
</dbReference>
<dbReference type="Pfam" id="PF02259">
    <property type="entry name" value="FAT"/>
    <property type="match status" value="1"/>
</dbReference>
<dbReference type="Pfam" id="PF02260">
    <property type="entry name" value="FATC"/>
    <property type="match status" value="1"/>
</dbReference>
<dbReference type="Pfam" id="PF08771">
    <property type="entry name" value="FRB_dom"/>
    <property type="match status" value="1"/>
</dbReference>
<dbReference type="Pfam" id="PF23593">
    <property type="entry name" value="HEAT_ATR"/>
    <property type="match status" value="1"/>
</dbReference>
<dbReference type="Pfam" id="PF11865">
    <property type="entry name" value="mTOR_dom"/>
    <property type="match status" value="1"/>
</dbReference>
<dbReference type="Pfam" id="PF00454">
    <property type="entry name" value="PI3_PI4_kinase"/>
    <property type="match status" value="1"/>
</dbReference>
<dbReference type="SMART" id="SM01346">
    <property type="entry name" value="DUF3385"/>
    <property type="match status" value="1"/>
</dbReference>
<dbReference type="SMART" id="SM01343">
    <property type="entry name" value="FATC"/>
    <property type="match status" value="1"/>
</dbReference>
<dbReference type="SMART" id="SM00146">
    <property type="entry name" value="PI3Kc"/>
    <property type="match status" value="1"/>
</dbReference>
<dbReference type="SMART" id="SM01345">
    <property type="entry name" value="Rapamycin_bind"/>
    <property type="match status" value="1"/>
</dbReference>
<dbReference type="SUPFAM" id="SSF48371">
    <property type="entry name" value="ARM repeat"/>
    <property type="match status" value="1"/>
</dbReference>
<dbReference type="SUPFAM" id="SSF47212">
    <property type="entry name" value="FKBP12-rapamycin-binding domain of FKBP-rapamycin-associated protein (FRAP)"/>
    <property type="match status" value="1"/>
</dbReference>
<dbReference type="SUPFAM" id="SSF56112">
    <property type="entry name" value="Protein kinase-like (PK-like)"/>
    <property type="match status" value="1"/>
</dbReference>
<dbReference type="PROSITE" id="PS51189">
    <property type="entry name" value="FAT"/>
    <property type="match status" value="1"/>
</dbReference>
<dbReference type="PROSITE" id="PS51190">
    <property type="entry name" value="FATC"/>
    <property type="match status" value="1"/>
</dbReference>
<dbReference type="PROSITE" id="PS00915">
    <property type="entry name" value="PI3_4_KINASE_1"/>
    <property type="match status" value="1"/>
</dbReference>
<dbReference type="PROSITE" id="PS00916">
    <property type="entry name" value="PI3_4_KINASE_2"/>
    <property type="match status" value="1"/>
</dbReference>
<dbReference type="PROSITE" id="PS50290">
    <property type="entry name" value="PI3_4_KINASE_3"/>
    <property type="match status" value="1"/>
</dbReference>
<keyword id="KW-0007">Acetylation</keyword>
<keyword id="KW-0025">Alternative splicing</keyword>
<keyword id="KW-0067">ATP-binding</keyword>
<keyword id="KW-1003">Cell membrane</keyword>
<keyword id="KW-0963">Cytoplasm</keyword>
<keyword id="KW-0968">Cytoplasmic vesicle</keyword>
<keyword id="KW-0903">Direct protein sequencing</keyword>
<keyword id="KW-0256">Endoplasmic reticulum</keyword>
<keyword id="KW-0333">Golgi apparatus</keyword>
<keyword id="KW-1017">Isopeptide bond</keyword>
<keyword id="KW-0418">Kinase</keyword>
<keyword id="KW-0458">Lysosome</keyword>
<keyword id="KW-0460">Magnesium</keyword>
<keyword id="KW-0472">Membrane</keyword>
<keyword id="KW-0479">Metal-binding</keyword>
<keyword id="KW-0492">Microsome</keyword>
<keyword id="KW-0496">Mitochondrion</keyword>
<keyword id="KW-1000">Mitochondrion outer membrane</keyword>
<keyword id="KW-0547">Nucleotide-binding</keyword>
<keyword id="KW-0539">Nucleus</keyword>
<keyword id="KW-0597">Phosphoprotein</keyword>
<keyword id="KW-1185">Reference proteome</keyword>
<keyword id="KW-0677">Repeat</keyword>
<keyword id="KW-0723">Serine/threonine-protein kinase</keyword>
<keyword id="KW-0802">TPR repeat</keyword>
<keyword id="KW-0808">Transferase</keyword>
<keyword id="KW-0832">Ubl conjugation</keyword>
<proteinExistence type="evidence at protein level"/>
<name>MTOR_MOUSE</name>
<accession>Q9JLN9</accession>
<accession>Q2KHT0</accession>
<accession>Q811J5</accession>
<accession>Q9CST1</accession>
<protein>
    <recommendedName>
        <fullName evidence="45">Serine/threonine-protein kinase mTOR</fullName>
        <ecNumber evidence="6 16 17 25 33 37">2.7.11.1</ecNumber>
    </recommendedName>
    <alternativeName>
        <fullName>FK506-binding protein 12-rapamycin complex-associated protein 1</fullName>
    </alternativeName>
    <alternativeName>
        <fullName>FKBP12-rapamycin complex-associated protein</fullName>
    </alternativeName>
    <alternativeName>
        <fullName>Mammalian target of rapamycin</fullName>
        <shortName>mTOR</shortName>
    </alternativeName>
    <alternativeName>
        <fullName>Mechanistic target of rapamycin</fullName>
    </alternativeName>
    <alternativeName>
        <fullName>Rapamycin target protein 1</fullName>
        <shortName>RAPT1</shortName>
    </alternativeName>
    <alternativeName>
        <fullName evidence="45">Tyrosine-protein kinase mTOR</fullName>
        <ecNumber evidence="1">2.7.10.2</ecNumber>
    </alternativeName>
</protein>
<reference key="1">
    <citation type="submission" date="1999-05" db="EMBL/GenBank/DDBJ databases">
        <title>Positional cloning of mouse plasmacytoma susceptibility gene.</title>
        <authorList>
            <person name="Bliskovsky V."/>
            <person name="Mock B."/>
        </authorList>
    </citation>
    <scope>NUCLEOTIDE SEQUENCE [MRNA] (ISOFORM 1)</scope>
    <source>
        <strain>BALB/cJ</strain>
    </source>
</reference>
<reference key="2">
    <citation type="journal article" date="2009" name="PLoS Biol.">
        <title>Lineage-specific biology revealed by a finished genome assembly of the mouse.</title>
        <authorList>
            <person name="Church D.M."/>
            <person name="Goodstadt L."/>
            <person name="Hillier L.W."/>
            <person name="Zody M.C."/>
            <person name="Goldstein S."/>
            <person name="She X."/>
            <person name="Bult C.J."/>
            <person name="Agarwala R."/>
            <person name="Cherry J.L."/>
            <person name="DiCuccio M."/>
            <person name="Hlavina W."/>
            <person name="Kapustin Y."/>
            <person name="Meric P."/>
            <person name="Maglott D."/>
            <person name="Birtle Z."/>
            <person name="Marques A.C."/>
            <person name="Graves T."/>
            <person name="Zhou S."/>
            <person name="Teague B."/>
            <person name="Potamousis K."/>
            <person name="Churas C."/>
            <person name="Place M."/>
            <person name="Herschleb J."/>
            <person name="Runnheim R."/>
            <person name="Forrest D."/>
            <person name="Amos-Landgraf J."/>
            <person name="Schwartz D.C."/>
            <person name="Cheng Z."/>
            <person name="Lindblad-Toh K."/>
            <person name="Eichler E.E."/>
            <person name="Ponting C.P."/>
        </authorList>
    </citation>
    <scope>NUCLEOTIDE SEQUENCE [LARGE SCALE GENOMIC DNA]</scope>
    <source>
        <strain>C57BL/6J</strain>
    </source>
</reference>
<reference key="3">
    <citation type="journal article" date="2004" name="Genome Res.">
        <title>The status, quality, and expansion of the NIH full-length cDNA project: the Mammalian Gene Collection (MGC).</title>
        <authorList>
            <consortium name="The MGC Project Team"/>
        </authorList>
    </citation>
    <scope>NUCLEOTIDE SEQUENCE [LARGE SCALE MRNA] (ISOFORMS 1 AND 2)</scope>
    <source>
        <strain>C57BL/6J</strain>
        <strain>FVB/N</strain>
        <tissue>Kidney</tissue>
        <tissue>Retina</tissue>
    </source>
</reference>
<reference key="4">
    <citation type="journal article" date="2005" name="Science">
        <title>The transcriptional landscape of the mammalian genome.</title>
        <authorList>
            <person name="Carninci P."/>
            <person name="Kasukawa T."/>
            <person name="Katayama S."/>
            <person name="Gough J."/>
            <person name="Frith M.C."/>
            <person name="Maeda N."/>
            <person name="Oyama R."/>
            <person name="Ravasi T."/>
            <person name="Lenhard B."/>
            <person name="Wells C."/>
            <person name="Kodzius R."/>
            <person name="Shimokawa K."/>
            <person name="Bajic V.B."/>
            <person name="Brenner S.E."/>
            <person name="Batalov S."/>
            <person name="Forrest A.R."/>
            <person name="Zavolan M."/>
            <person name="Davis M.J."/>
            <person name="Wilming L.G."/>
            <person name="Aidinis V."/>
            <person name="Allen J.E."/>
            <person name="Ambesi-Impiombato A."/>
            <person name="Apweiler R."/>
            <person name="Aturaliya R.N."/>
            <person name="Bailey T.L."/>
            <person name="Bansal M."/>
            <person name="Baxter L."/>
            <person name="Beisel K.W."/>
            <person name="Bersano T."/>
            <person name="Bono H."/>
            <person name="Chalk A.M."/>
            <person name="Chiu K.P."/>
            <person name="Choudhary V."/>
            <person name="Christoffels A."/>
            <person name="Clutterbuck D.R."/>
            <person name="Crowe M.L."/>
            <person name="Dalla E."/>
            <person name="Dalrymple B.P."/>
            <person name="de Bono B."/>
            <person name="Della Gatta G."/>
            <person name="di Bernardo D."/>
            <person name="Down T."/>
            <person name="Engstrom P."/>
            <person name="Fagiolini M."/>
            <person name="Faulkner G."/>
            <person name="Fletcher C.F."/>
            <person name="Fukushima T."/>
            <person name="Furuno M."/>
            <person name="Futaki S."/>
            <person name="Gariboldi M."/>
            <person name="Georgii-Hemming P."/>
            <person name="Gingeras T.R."/>
            <person name="Gojobori T."/>
            <person name="Green R.E."/>
            <person name="Gustincich S."/>
            <person name="Harbers M."/>
            <person name="Hayashi Y."/>
            <person name="Hensch T.K."/>
            <person name="Hirokawa N."/>
            <person name="Hill D."/>
            <person name="Huminiecki L."/>
            <person name="Iacono M."/>
            <person name="Ikeo K."/>
            <person name="Iwama A."/>
            <person name="Ishikawa T."/>
            <person name="Jakt M."/>
            <person name="Kanapin A."/>
            <person name="Katoh M."/>
            <person name="Kawasawa Y."/>
            <person name="Kelso J."/>
            <person name="Kitamura H."/>
            <person name="Kitano H."/>
            <person name="Kollias G."/>
            <person name="Krishnan S.P."/>
            <person name="Kruger A."/>
            <person name="Kummerfeld S.K."/>
            <person name="Kurochkin I.V."/>
            <person name="Lareau L.F."/>
            <person name="Lazarevic D."/>
            <person name="Lipovich L."/>
            <person name="Liu J."/>
            <person name="Liuni S."/>
            <person name="McWilliam S."/>
            <person name="Madan Babu M."/>
            <person name="Madera M."/>
            <person name="Marchionni L."/>
            <person name="Matsuda H."/>
            <person name="Matsuzawa S."/>
            <person name="Miki H."/>
            <person name="Mignone F."/>
            <person name="Miyake S."/>
            <person name="Morris K."/>
            <person name="Mottagui-Tabar S."/>
            <person name="Mulder N."/>
            <person name="Nakano N."/>
            <person name="Nakauchi H."/>
            <person name="Ng P."/>
            <person name="Nilsson R."/>
            <person name="Nishiguchi S."/>
            <person name="Nishikawa S."/>
            <person name="Nori F."/>
            <person name="Ohara O."/>
            <person name="Okazaki Y."/>
            <person name="Orlando V."/>
            <person name="Pang K.C."/>
            <person name="Pavan W.J."/>
            <person name="Pavesi G."/>
            <person name="Pesole G."/>
            <person name="Petrovsky N."/>
            <person name="Piazza S."/>
            <person name="Reed J."/>
            <person name="Reid J.F."/>
            <person name="Ring B.Z."/>
            <person name="Ringwald M."/>
            <person name="Rost B."/>
            <person name="Ruan Y."/>
            <person name="Salzberg S.L."/>
            <person name="Sandelin A."/>
            <person name="Schneider C."/>
            <person name="Schoenbach C."/>
            <person name="Sekiguchi K."/>
            <person name="Semple C.A."/>
            <person name="Seno S."/>
            <person name="Sessa L."/>
            <person name="Sheng Y."/>
            <person name="Shibata Y."/>
            <person name="Shimada H."/>
            <person name="Shimada K."/>
            <person name="Silva D."/>
            <person name="Sinclair B."/>
            <person name="Sperling S."/>
            <person name="Stupka E."/>
            <person name="Sugiura K."/>
            <person name="Sultana R."/>
            <person name="Takenaka Y."/>
            <person name="Taki K."/>
            <person name="Tammoja K."/>
            <person name="Tan S.L."/>
            <person name="Tang S."/>
            <person name="Taylor M.S."/>
            <person name="Tegner J."/>
            <person name="Teichmann S.A."/>
            <person name="Ueda H.R."/>
            <person name="van Nimwegen E."/>
            <person name="Verardo R."/>
            <person name="Wei C.L."/>
            <person name="Yagi K."/>
            <person name="Yamanishi H."/>
            <person name="Zabarovsky E."/>
            <person name="Zhu S."/>
            <person name="Zimmer A."/>
            <person name="Hide W."/>
            <person name="Bult C."/>
            <person name="Grimmond S.M."/>
            <person name="Teasdale R.D."/>
            <person name="Liu E.T."/>
            <person name="Brusic V."/>
            <person name="Quackenbush J."/>
            <person name="Wahlestedt C."/>
            <person name="Mattick J.S."/>
            <person name="Hume D.A."/>
            <person name="Kai C."/>
            <person name="Sasaki D."/>
            <person name="Tomaru Y."/>
            <person name="Fukuda S."/>
            <person name="Kanamori-Katayama M."/>
            <person name="Suzuki M."/>
            <person name="Aoki J."/>
            <person name="Arakawa T."/>
            <person name="Iida J."/>
            <person name="Imamura K."/>
            <person name="Itoh M."/>
            <person name="Kato T."/>
            <person name="Kawaji H."/>
            <person name="Kawagashira N."/>
            <person name="Kawashima T."/>
            <person name="Kojima M."/>
            <person name="Kondo S."/>
            <person name="Konno H."/>
            <person name="Nakano K."/>
            <person name="Ninomiya N."/>
            <person name="Nishio T."/>
            <person name="Okada M."/>
            <person name="Plessy C."/>
            <person name="Shibata K."/>
            <person name="Shiraki T."/>
            <person name="Suzuki S."/>
            <person name="Tagami M."/>
            <person name="Waki K."/>
            <person name="Watahiki A."/>
            <person name="Okamura-Oho Y."/>
            <person name="Suzuki H."/>
            <person name="Kawai J."/>
            <person name="Hayashizaki Y."/>
        </authorList>
    </citation>
    <scope>NUCLEOTIDE SEQUENCE [LARGE SCALE MRNA] OF 1155-1334</scope>
    <source>
        <strain>C57BL/6J</strain>
        <tissue>Embryo</tissue>
    </source>
</reference>
<reference key="5">
    <citation type="submission" date="2007-04" db="UniProtKB">
        <authorList>
            <person name="Lubec G."/>
            <person name="Kang S.U."/>
        </authorList>
    </citation>
    <scope>PROTEIN SEQUENCE OF 1287-1293</scope>
    <scope>IDENTIFICATION BY MASS SPECTROMETRY</scope>
    <source>
        <strain>C57BL/6J</strain>
        <tissue>Brain</tissue>
    </source>
</reference>
<reference key="6">
    <citation type="journal article" date="1994" name="Proc. Natl. Acad. Sci. U.S.A.">
        <title>RAPT1, a mammalian homolog of yeast Tor, interacts with the FKBP12/rapamycin complex.</title>
        <authorList>
            <person name="Chiu M.I."/>
            <person name="Katz H."/>
            <person name="Berlin V."/>
        </authorList>
    </citation>
    <scope>NUCLEOTIDE SEQUENCE [MRNA] OF 1987-2146</scope>
    <scope>ACTIVITY REGULATION</scope>
    <scope>MUTAGENESIS OF SER-2035</scope>
    <scope>TISSUE SPECIFICITY</scope>
    <source>
        <tissue>Embryo</tissue>
    </source>
</reference>
<reference key="7">
    <citation type="journal article" date="2002" name="Proc. Natl. Acad. Sci. U.S.A.">
        <title>Insulin-stimulated phosphorylation of lipin mediated by the mammalian target of rapamycin.</title>
        <authorList>
            <person name="Huffman T.A."/>
            <person name="Mothe-Satney I."/>
            <person name="Lawrence J.C. Jr."/>
        </authorList>
    </citation>
    <scope>FUNCTION IN PHOSPHORYLATION OF LPIN1</scope>
    <scope>CATALYTIC ACTIVITY</scope>
</reference>
<reference key="8">
    <citation type="journal article" date="2004" name="J. Biol. Chem.">
        <title>Thr2446 is a novel mammalian target of rapamycin (mTOR) phosphorylation site regulated by nutrient status.</title>
        <authorList>
            <person name="Cheng S.W."/>
            <person name="Fryer L.G."/>
            <person name="Carling D."/>
            <person name="Shepherd P.R."/>
        </authorList>
    </citation>
    <scope>PHOSPHORYLATION AT THR-2446 AND SER-2448</scope>
</reference>
<reference key="9">
    <citation type="journal article" date="2002" name="Proc. Natl. Acad. Sci. U.S.A.">
        <title>FKBP12-rapamycin-associated protein associates with mitochondria and senses osmotic stress via mitochondrial dysfunction.</title>
        <authorList>
            <person name="Desai B.N."/>
            <person name="Myers B.R."/>
            <person name="Schreiber S.L."/>
        </authorList>
    </citation>
    <scope>SUBCELLULAR LOCATION</scope>
</reference>
<reference key="10">
    <citation type="journal article" date="2004" name="Genes Dev.">
        <title>Regulation of mTOR function in response to hypoxia by REDD1 and the TSC1/TSC2 tumor suppressor complex.</title>
        <authorList>
            <person name="Brugarolas J."/>
            <person name="Lei K."/>
            <person name="Hurley R.L."/>
            <person name="Manning B.D."/>
            <person name="Reiling J.H."/>
            <person name="Hafen E."/>
            <person name="Witters L.A."/>
            <person name="Ellisen L.W."/>
            <person name="Kaelin W.G. Jr."/>
        </authorList>
    </citation>
    <scope>ACTIVITY REGULATION</scope>
    <scope>FUNCTION IN RESPONSE TO HYPOXIA</scope>
</reference>
<reference key="11">
    <citation type="journal article" date="2004" name="Mol. Cell. Biol.">
        <title>Disruption of the mouse mTOR gene leads to early postimplantation lethality and prohibits embryonic stem cell development.</title>
        <authorList>
            <person name="Gangloff Y.G."/>
            <person name="Mueller M."/>
            <person name="Dann S.G."/>
            <person name="Svoboda P."/>
            <person name="Sticker M."/>
            <person name="Spetz J.F."/>
            <person name="Um S.H."/>
            <person name="Brown E.J."/>
            <person name="Cereghini S."/>
            <person name="Thomas G."/>
            <person name="Kozma S.C."/>
        </authorList>
    </citation>
    <scope>FUNCTION</scope>
    <scope>DISRUPTION PHENOTYPE</scope>
</reference>
<reference key="12">
    <citation type="journal article" date="2004" name="Nat. Cell Biol.">
        <title>Mammalian TOR complex 2 controls the actin cytoskeleton and is rapamycin insensitive.</title>
        <authorList>
            <person name="Jacinto E."/>
            <person name="Loewith R."/>
            <person name="Schmidt A."/>
            <person name="Lin S."/>
            <person name="Ruegg M.A."/>
            <person name="Hall A."/>
            <person name="Hall M.N."/>
        </authorList>
    </citation>
    <scope>FUNCTION</scope>
    <scope>IDENTIFICATION IN MTORC2 COMPLEX</scope>
</reference>
<reference key="13">
    <citation type="journal article" date="2005" name="J. Biol. Chem.">
        <title>mTOR.RICTOR is the Ser473 kinase for Akt/protein kinase B in 3T3-L1 adipocytes.</title>
        <authorList>
            <person name="Hresko R.C."/>
            <person name="Mueckler M."/>
        </authorList>
    </citation>
    <scope>FUNCTION</scope>
</reference>
<reference key="14">
    <citation type="journal article" date="2006" name="Cell">
        <title>SIN1/MIP1 maintains rictor-mTOR complex integrity and regulates Akt phosphorylation and substrate specificity.</title>
        <authorList>
            <person name="Jacinto E."/>
            <person name="Facchinetti V."/>
            <person name="Liu D."/>
            <person name="Soto N."/>
            <person name="Wei S."/>
            <person name="Jung S.Y."/>
            <person name="Huang Q."/>
            <person name="Qin J."/>
            <person name="Su B."/>
        </authorList>
    </citation>
    <scope>FUNCTION</scope>
    <scope>IDENTIFICATION IN MTORC2 COMPLEX</scope>
</reference>
<reference key="15">
    <citation type="journal article" date="2006" name="Nature">
        <title>PML inhibits HIF-1alpha translation and neoangiogenesis through repression of mTOR.</title>
        <authorList>
            <person name="Bernardi R."/>
            <person name="Guernah I."/>
            <person name="Jin D."/>
            <person name="Grisendi S."/>
            <person name="Alimonti A."/>
            <person name="Teruya-Feldstein J."/>
            <person name="Cordon-Cardo C."/>
            <person name="Simon M.C."/>
            <person name="Rafii S."/>
            <person name="Pandolfi P.P."/>
        </authorList>
    </citation>
    <scope>FUNCTION</scope>
    <scope>SUBCELLULAR LOCATION</scope>
    <scope>INTERACTION WITH PML</scope>
</reference>
<reference key="16">
    <citation type="journal article" date="2007" name="Nature">
        <title>mTOR controls mitochondrial oxidative function through a YY1-PGC-1alpha transcriptional complex.</title>
        <authorList>
            <person name="Cunningham J.T."/>
            <person name="Rodgers J.T."/>
            <person name="Arlow D.H."/>
            <person name="Vazquez F."/>
            <person name="Mootha V.K."/>
            <person name="Puigserver P."/>
        </authorList>
    </citation>
    <scope>FUNCTION IN MITOCHONDRIAL BIOGENESIS</scope>
</reference>
<reference key="17">
    <citation type="journal article" date="2007" name="Proc. Natl. Acad. Sci. U.S.A.">
        <title>Large-scale phosphorylation analysis of mouse liver.</title>
        <authorList>
            <person name="Villen J."/>
            <person name="Beausoleil S.A."/>
            <person name="Gerber S.A."/>
            <person name="Gygi S.P."/>
        </authorList>
    </citation>
    <scope>PHOSPHORYLATION [LARGE SCALE ANALYSIS] AT SER-2478 AND SER-2481</scope>
    <scope>IDENTIFICATION BY MASS SPECTROMETRY [LARGE SCALE ANALYSIS]</scope>
    <source>
        <tissue>Liver</tissue>
    </source>
</reference>
<reference key="18">
    <citation type="journal article" date="2008" name="EMBO J.">
        <title>Essential function of TORC2 in PKC and Akt turn motif phosphorylation, maturation and signalling.</title>
        <authorList>
            <person name="Ikenoue T."/>
            <person name="Inoki K."/>
            <person name="Yang Q."/>
            <person name="Zhou X."/>
            <person name="Guan K.L."/>
        </authorList>
    </citation>
    <scope>FUNCTION</scope>
    <scope>CATALYTIC ACTIVITY</scope>
</reference>
<reference key="19">
    <citation type="journal article" date="2008" name="EMBO J.">
        <title>The mammalian target of rapamycin complex 2 controls folding and stability of Akt and protein kinase C.</title>
        <authorList>
            <person name="Facchinetti V."/>
            <person name="Ouyang W."/>
            <person name="Wei H."/>
            <person name="Soto N."/>
            <person name="Lazorchak A."/>
            <person name="Gould C."/>
            <person name="Lowry C."/>
            <person name="Newton A.C."/>
            <person name="Mao Y."/>
            <person name="Miao R.Q."/>
            <person name="Sessa W.C."/>
            <person name="Qin J."/>
            <person name="Zhang P."/>
            <person name="Su B."/>
            <person name="Jacinto E."/>
        </authorList>
    </citation>
    <scope>FUNCTION</scope>
    <scope>CATALYTIC ACTIVITY</scope>
</reference>
<reference key="20">
    <citation type="journal article" date="2009" name="EMBO J.">
        <title>Transcription factor C/EBPbeta isoform ratio regulates osteoclastogenesis through MafB.</title>
        <authorList>
            <person name="Smink J.J."/>
            <person name="Begay V."/>
            <person name="Schoenmaker T."/>
            <person name="Sterneck E."/>
            <person name="de Vries T.J."/>
            <person name="Leutz A."/>
        </authorList>
    </citation>
    <scope>FUNCTION</scope>
</reference>
<reference key="21">
    <citation type="journal article" date="2009" name="J. Biol. Chem.">
        <title>Mammalian target of rapamycin complex 1 (mTORC1) activity is associated with phosphorylation of raptor by mTOR.</title>
        <authorList>
            <person name="Wang L."/>
            <person name="Lawrence J.C. Jr."/>
            <person name="Sturgill T.W."/>
            <person name="Harris T.E."/>
        </authorList>
    </citation>
    <scope>FUNCTION</scope>
</reference>
<reference key="22">
    <citation type="journal article" date="2009" name="Mol. Cell. Biol.">
        <title>Site-specific mTOR phosphorylation promotes mTORC1-mediated signaling and cell growth.</title>
        <authorList>
            <person name="Acosta-Jaquez H.A."/>
            <person name="Keller J.A."/>
            <person name="Foster K.G."/>
            <person name="Ekim B."/>
            <person name="Soliman G.A."/>
            <person name="Feener E.P."/>
            <person name="Ballif B.A."/>
            <person name="Fingar D.C."/>
        </authorList>
    </citation>
    <scope>PHOSPHORYLATION AT SER-1261</scope>
    <scope>ACTIVITY REGULATION</scope>
</reference>
<reference key="23">
    <citation type="journal article" date="2009" name="Mol. Cell. Biol.">
        <title>Regulation of myoblast differentiation by the nuclear envelope protein NET39.</title>
        <authorList>
            <person name="Liu G.H."/>
            <person name="Guan T."/>
            <person name="Datta K."/>
            <person name="Coppinger J."/>
            <person name="Yates J. III"/>
            <person name="Gerace L."/>
        </authorList>
    </citation>
    <scope>INTERACTION WITH PLPP7</scope>
</reference>
<reference key="24">
    <citation type="journal article" date="2010" name="Cell">
        <title>A tissue-specific atlas of mouse protein phosphorylation and expression.</title>
        <authorList>
            <person name="Huttlin E.L."/>
            <person name="Jedrychowski M.P."/>
            <person name="Elias J.E."/>
            <person name="Goswami T."/>
            <person name="Rad R."/>
            <person name="Beausoleil S.A."/>
            <person name="Villen J."/>
            <person name="Haas W."/>
            <person name="Sowa M.E."/>
            <person name="Gygi S.P."/>
        </authorList>
    </citation>
    <scope>PHOSPHORYLATION [LARGE SCALE ANALYSIS] AT SER-1261; SER-2478 AND SER-2481</scope>
    <scope>IDENTIFICATION BY MASS SPECTROMETRY [LARGE SCALE ANALYSIS]</scope>
    <source>
        <tissue>Brain</tissue>
        <tissue>Brown adipose tissue</tissue>
        <tissue>Heart</tissue>
        <tissue>Kidney</tissue>
        <tissue>Liver</tissue>
        <tissue>Lung</tissue>
        <tissue>Pancreas</tissue>
        <tissue>Spleen</tissue>
        <tissue>Testis</tissue>
    </source>
</reference>
<reference key="25">
    <citation type="journal article" date="2010" name="EMBO J.">
        <title>mTORC2 can associate with ribosomes to promote cotranslational phosphorylation and stability of nascent Akt polypeptide.</title>
        <authorList>
            <person name="Oh W.J."/>
            <person name="Wu C.C."/>
            <person name="Kim S.J."/>
            <person name="Facchinetti V."/>
            <person name="Julien L.A."/>
            <person name="Finlan M."/>
            <person name="Roux P.P."/>
            <person name="Su B."/>
            <person name="Jacinto E."/>
        </authorList>
    </citation>
    <scope>FUNCTION</scope>
    <scope>ACTIVITY REGULATION</scope>
</reference>
<reference key="26">
    <citation type="journal article" date="2010" name="Genes Dev.">
        <title>Tel2 structure and function in the Hsp90-dependent maturation of mTOR and ATR complexes.</title>
        <authorList>
            <person name="Takai H."/>
            <person name="Xie Y."/>
            <person name="de Lange T."/>
            <person name="Pavletich N.P."/>
        </authorList>
    </citation>
    <scope>INTERACTION WITH MLST8; PRR5 AND RPTOR</scope>
</reference>
<reference key="27">
    <citation type="journal article" date="2011" name="J. Biol. Chem.">
        <title>mTOR complex 2 targets Akt for proteasomal degradation via phosphorylation at the hydrophobic motif.</title>
        <authorList>
            <person name="Wu Y.T."/>
            <person name="Ouyang W."/>
            <person name="Lazorchak A.S."/>
            <person name="Liu D."/>
            <person name="Shen H.M."/>
            <person name="Su B."/>
        </authorList>
    </citation>
    <scope>FUNCTION IN PHOSPHORYLATION OF AKT1</scope>
</reference>
<reference key="28">
    <citation type="journal article" date="2011" name="Nat. Cell Biol.">
        <title>AMPK and mTOR regulate autophagy through direct phosphorylation of Ulk1.</title>
        <authorList>
            <person name="Kim J."/>
            <person name="Kundu M."/>
            <person name="Viollet B."/>
            <person name="Guan K.L."/>
        </authorList>
    </citation>
    <scope>FUNCTION IN AUTOPHAGY</scope>
    <scope>FUNCTION IN PHOSPHORYLATION OF ULK1</scope>
</reference>
<reference key="29">
    <citation type="journal article" date="2011" name="Science">
        <title>The mTOR-regulated phosphoproteome reveals a mechanism of mTORC1-mediated inhibition of growth factor signaling.</title>
        <authorList>
            <person name="Hsu P.P."/>
            <person name="Kang S.A."/>
            <person name="Rameseder J."/>
            <person name="Zhang Y."/>
            <person name="Ottina K.A."/>
            <person name="Lim D."/>
            <person name="Peterson T.R."/>
            <person name="Choi Y."/>
            <person name="Gray N.S."/>
            <person name="Yaffe M.B."/>
            <person name="Marto J.A."/>
            <person name="Sabatini D.M."/>
        </authorList>
    </citation>
    <scope>FUNCTION IN PHOSPHORYLATION OF GRB10</scope>
</reference>
<reference key="30">
    <citation type="journal article" date="2012" name="EMBO Mol. Med.">
        <title>5-HT(6) receptor recruitment of mTOR as a mechanism for perturbed cognition in schizophrenia.</title>
        <authorList>
            <person name="Meffre J."/>
            <person name="Chaumont-Dubel S."/>
            <person name="Mannoury la Cour C."/>
            <person name="Loiseau F."/>
            <person name="Watson D.J."/>
            <person name="Dekeyne A."/>
            <person name="Seveno M."/>
            <person name="Rivet J.M."/>
            <person name="Gaven F."/>
            <person name="Deleris P."/>
            <person name="Herve D."/>
            <person name="Fone K.C."/>
            <person name="Bockaert J."/>
            <person name="Millan M.J."/>
            <person name="Marin P."/>
        </authorList>
    </citation>
    <scope>INTERACTION WITH HTR6</scope>
</reference>
<reference key="31">
    <citation type="journal article" date="2012" name="Mol. Cell">
        <title>mTOR complex 2 regulates proper turnover of insulin receptor substrate-1 via the ubiquitin ligase subunit Fbw8.</title>
        <authorList>
            <person name="Kim S.J."/>
            <person name="DeStefano M.A."/>
            <person name="Oh W.J."/>
            <person name="Wu C.C."/>
            <person name="Vega-Cotto N.M."/>
            <person name="Finlan M."/>
            <person name="Liu D."/>
            <person name="Su B."/>
            <person name="Jacinto E."/>
        </authorList>
    </citation>
    <scope>FUNCTION</scope>
</reference>
<reference key="32">
    <citation type="journal article" date="2013" name="Genes Dev.">
        <title>mTOR complex 2 phosphorylates IMP1 cotranslationally to promote IGF2 production and the proliferation of mouse embryonic fibroblasts.</title>
        <authorList>
            <person name="Dai N."/>
            <person name="Christiansen J."/>
            <person name="Nielsen F.C."/>
            <person name="Avruch J."/>
        </authorList>
    </citation>
    <scope>FUNCTION</scope>
</reference>
<reference key="33">
    <citation type="journal article" date="2013" name="J. Biol. Chem.">
        <title>Skeletal muscle-derived myonectin activates the mammalian target of rapamycin (mTOR) pathway to suppress autophagy in liver.</title>
        <authorList>
            <person name="Seldin M.M."/>
            <person name="Lei X."/>
            <person name="Tan S.Y."/>
            <person name="Stanson K.P."/>
            <person name="Wei Z."/>
            <person name="Wong G.W."/>
        </authorList>
    </citation>
    <scope>PHOSPHORYLATION AT SER-2448</scope>
</reference>
<reference key="34">
    <citation type="journal article" date="2014" name="Nature">
        <title>Cell-cycle-regulated activation of Akt kinase by phosphorylation at its carboxyl terminus.</title>
        <authorList>
            <person name="Liu P."/>
            <person name="Begley M."/>
            <person name="Michowski W."/>
            <person name="Inuzuka H."/>
            <person name="Ginzberg M."/>
            <person name="Gao D."/>
            <person name="Tsou P."/>
            <person name="Gan W."/>
            <person name="Papa A."/>
            <person name="Kim B.M."/>
            <person name="Wan L."/>
            <person name="Singh A."/>
            <person name="Zhai B."/>
            <person name="Yuan M."/>
            <person name="Wang Z."/>
            <person name="Gygi S.P."/>
            <person name="Lee T.H."/>
            <person name="Lu K.P."/>
            <person name="Toker A."/>
            <person name="Pandolfi P.P."/>
            <person name="Asara J.M."/>
            <person name="Kirschner M.W."/>
            <person name="Sicinski P."/>
            <person name="Cantley L."/>
            <person name="Wei W."/>
        </authorList>
    </citation>
    <scope>FUNCTION</scope>
</reference>
<reference key="35">
    <citation type="journal article" date="2015" name="J. Biol. Chem.">
        <title>Deletion of MLIP (muscle-enriched A-type lamin-interacting protein) leads to cardiac hyperactivation of Akt/mammalian target of rapamycin (mTOR) and impaired cardiac adaptation.</title>
        <authorList>
            <person name="Cattin M.E."/>
            <person name="Wang J."/>
            <person name="Weldrick J.J."/>
            <person name="Roeske C.L."/>
            <person name="Mak E."/>
            <person name="Thorn S.L."/>
            <person name="DaSilva J.N."/>
            <person name="Wang Y."/>
            <person name="Lusis A.J."/>
            <person name="Burgon P.G."/>
        </authorList>
    </citation>
    <scope>PHOSPHORYLATION AT SER-2448</scope>
</reference>
<reference key="36">
    <citation type="journal article" date="2016" name="Genes Dev.">
        <title>The tumor suppressor FLCN mediates an alternate mTOR pathway to regulate browning of adipose tissue.</title>
        <authorList>
            <person name="Wada S."/>
            <person name="Neinast M."/>
            <person name="Jang C."/>
            <person name="Ibrahim Y.H."/>
            <person name="Lee G."/>
            <person name="Babu A."/>
            <person name="Li J."/>
            <person name="Hoshino A."/>
            <person name="Rowe G.C."/>
            <person name="Rhee J."/>
            <person name="Martina J.A."/>
            <person name="Puertollano R."/>
            <person name="Blenis J."/>
            <person name="Morley M."/>
            <person name="Baur J.A."/>
            <person name="Seale P."/>
            <person name="Arany Z."/>
        </authorList>
    </citation>
    <scope>FUNCTION</scope>
    <scope>CATALYTIC ACTIVITY</scope>
</reference>
<reference key="37">
    <citation type="journal article" date="2017" name="Cancer Cell">
        <title>mTORC2 promotes tumorigenesis via lipid synthesis.</title>
        <authorList>
            <person name="Guri Y."/>
            <person name="Colombi M."/>
            <person name="Dazert E."/>
            <person name="Hindupur S.K."/>
            <person name="Roszik J."/>
            <person name="Moes S."/>
            <person name="Jenoe P."/>
            <person name="Heim M.H."/>
            <person name="Riezman I."/>
            <person name="Riezman H."/>
            <person name="Hall M.N."/>
        </authorList>
    </citation>
    <scope>FUNCTION</scope>
</reference>
<reference key="38">
    <citation type="journal article" date="2018" name="EMBO J.">
        <title>The IKK-related kinase TBK1 activates mTORC1 directly in response to growth factors and innate immune agonists.</title>
        <authorList>
            <person name="Bodur C."/>
            <person name="Kazyken D."/>
            <person name="Huang K."/>
            <person name="Ekim Ustunel B."/>
            <person name="Siroky K.A."/>
            <person name="Tooley A.S."/>
            <person name="Gonzalez I.E."/>
            <person name="Foley D.H."/>
            <person name="Acosta-Jaquez H.A."/>
            <person name="Barnes T.M."/>
            <person name="Steinl G.K."/>
            <person name="Cho K.W."/>
            <person name="Lumeng C.N."/>
            <person name="Riddle S.M."/>
            <person name="Myers M.G. Jr."/>
            <person name="Fingar D.C."/>
        </authorList>
    </citation>
    <scope>PHOSPHORYLATION AT SER-2159</scope>
    <scope>MUTAGENESIS OF SER-2159</scope>
</reference>
<reference key="39">
    <citation type="journal article" date="2018" name="PLoS Genet.">
        <title>mTOR signaling regulates central and peripheral circadian clock function.</title>
        <authorList>
            <person name="Ramanathan C."/>
            <person name="Kathale N.D."/>
            <person name="Liu D."/>
            <person name="Lee C."/>
            <person name="Freeman D.A."/>
            <person name="Hogenesch J.B."/>
            <person name="Cao R."/>
            <person name="Liu A.C."/>
        </authorList>
    </citation>
    <scope>FUNCTION</scope>
</reference>
<reference key="40">
    <citation type="journal article" date="2020" name="Biochim. Biophys. Acta">
        <title>Heat shock factor 4 regulates lysosome activity by modulating the alphaB-crystallin-ATP6V1A-mTOR complex in ocular lens.</title>
        <authorList>
            <person name="Cui X."/>
            <person name="Feng R."/>
            <person name="Wang J."/>
            <person name="Du C."/>
            <person name="Pi X."/>
            <person name="Chen D."/>
            <person name="Li J."/>
            <person name="Li H."/>
            <person name="Zhang J."/>
            <person name="Zhang J."/>
            <person name="Mu H."/>
            <person name="Zhang F."/>
            <person name="Liu M."/>
            <person name="Hu Y."/>
        </authorList>
    </citation>
    <scope>INTERACTION WITH ATP6V1A AND CRYAB</scope>
</reference>
<reference key="41">
    <citation type="journal article" date="2019" name="J. Biol. Chem.">
        <title>Serine 474 phosphorylation is essential for maximal Akt2 kinase activity in adipocytes.</title>
        <authorList>
            <person name="Kearney A.L."/>
            <person name="Cooke K.C."/>
            <person name="Norris D.M."/>
            <person name="Zadoorian A."/>
            <person name="Krycer J.R."/>
            <person name="Fazakerley D.J."/>
            <person name="Burchfield J.G."/>
            <person name="James D.E."/>
        </authorList>
    </citation>
    <scope>FUNCTION</scope>
    <scope>CATALYTIC ACTIVITY</scope>
</reference>
<reference key="42">
    <citation type="journal article" date="2021" name="Cell">
        <title>Control of gasdermin D oligomerization and pyroptosis by the Ragulator-Rag-mTORC1 pathway.</title>
        <authorList>
            <person name="Evavold C.L."/>
            <person name="Hafner-Bratkovic I."/>
            <person name="Devant P."/>
            <person name="D'Andrea J.M."/>
            <person name="Ngwa E.M."/>
            <person name="Borsic E."/>
            <person name="Doench J.G."/>
            <person name="LaFleur M.W."/>
            <person name="Sharpe A.H."/>
            <person name="Thiagarajah J.R."/>
            <person name="Kagan J.C."/>
        </authorList>
    </citation>
    <scope>FUNCTION</scope>
</reference>
<reference key="43">
    <citation type="journal article" date="2021" name="J. Biol. Chem.">
        <title>The innate immune kinase TBK1 directly increases mTORC2 activity and downstream signaling to Akt.</title>
        <authorList>
            <person name="Tooley A.S."/>
            <person name="Kazyken D."/>
            <person name="Bodur C."/>
            <person name="Gonzalez I.E."/>
            <person name="Fingar D.C."/>
        </authorList>
    </citation>
    <scope>PHOSPHORYLATION AT SER-2159</scope>
    <scope>MUTAGENESIS OF SER-2159</scope>
</reference>
<reference key="44">
    <citation type="journal article" date="2021" name="Sci. Signal.">
        <title>mTORC2 controls the activity of PKC and Akt by phosphorylating a conserved TOR interaction motif.</title>
        <authorList>
            <person name="Baffi T.R."/>
            <person name="Lorden G."/>
            <person name="Wozniak J.M."/>
            <person name="Feichtner A."/>
            <person name="Yeung W."/>
            <person name="Kornev A.P."/>
            <person name="King C.C."/>
            <person name="Del Rio J.C."/>
            <person name="Limaye A.J."/>
            <person name="Bogomolovas J."/>
            <person name="Gould C.M."/>
            <person name="Chen J."/>
            <person name="Kennedy E.J."/>
            <person name="Kannan N."/>
            <person name="Gonzalez D.J."/>
            <person name="Stefan E."/>
            <person name="Taylor S.S."/>
            <person name="Newton A.C."/>
        </authorList>
    </citation>
    <scope>FUNCTION</scope>
</reference>
<organism>
    <name type="scientific">Mus musculus</name>
    <name type="common">Mouse</name>
    <dbReference type="NCBI Taxonomy" id="10090"/>
    <lineage>
        <taxon>Eukaryota</taxon>
        <taxon>Metazoa</taxon>
        <taxon>Chordata</taxon>
        <taxon>Craniata</taxon>
        <taxon>Vertebrata</taxon>
        <taxon>Euteleostomi</taxon>
        <taxon>Mammalia</taxon>
        <taxon>Eutheria</taxon>
        <taxon>Euarchontoglires</taxon>
        <taxon>Glires</taxon>
        <taxon>Rodentia</taxon>
        <taxon>Myomorpha</taxon>
        <taxon>Muroidea</taxon>
        <taxon>Muridae</taxon>
        <taxon>Murinae</taxon>
        <taxon>Mus</taxon>
        <taxon>Mus</taxon>
    </lineage>
</organism>
<sequence>MLGTGPAVATASAATSSNVSVLQQFASGLKSRNEETRAKAAKELQHYVTMELREMSQEESTRFYDQLNHHIFELVSSSDANERKGGILAIASLIGVEGGNSTRIGRFANYLRNLLPSSDPVVMEMASKAIGRLAMAGDTFTAEYVEFEVKRALEWLGADRNEGRRHAAVLVLRELAISVPTFFFQQVQPFFDNIFVAVWDPKQAIREGAVAALRACLILTTQREPKEMQKPQWYRHTFEEAEKGFDETLAKEKGMNRDDRIHGALLILNELVRISSMEGERLREEMEEITQQQLVHDKYCKDLMGFGTKPRHITPFTSFQAVQPQQPNALVGLLGYSSPQGLMGFGTSPSPAKSTLVESRCCRDLMEEKFDQVCQWVLKCRSSKNSLIQMTILNLLPRLAAFRPSAFTDTQYLQDTMNHVLSCVKKEKERTAAFQALGLLSVAVRSEFKVYLPRVLDIIRAALPPKDFAHKRQKTVQVDATVFTCISMLARAMGPGIQQDIKELLEPMLAVGLSPALTAVLYDLSRQIPQLKKDIQDGLLKMLSLVLMHKPLRHPGMPKGLAHQLASPGLTTLPEASDVASITLALRTLGSFEFEGHSLTQFVRHCADHFLNSEHKEIRMEAARTCSRLLTPSIHLISGHAHVVSQTAVQVVADVLSKLLVVGITDPDPDIRYCVLASLDERFDAHLAQAENLQALFVALNDQVFEIRELAICTVGRLSSMNPAFVMPFLRKMLIQILTELEHSGIGRIKEQSARMLGHLVSNAPRLIRPYMEPILKALILKLKDPDPDPNPGVINNVLATIGELAQVSGLEMRKWVDELFIIIMDMLQDSSLLAKRQVALWTLGQLVASTGYVVEPYRKYPTLLEVLLNFLKTEQNQGTRREAIRVLGLLGALDPYKHKVNIGMIDQSRDASAVSLSESKSSQDSSDYSTSEMLVNMGNLPLDEFYPAVSMVALMRIFRDQSLSHHHTMVVQAITFIFKSLGLKCVQFLPQVMPTFLNVIRVCDGAIREFLFQQLGMLVSFVKSHIRPYMDEIVTLMREFWVMNTSIQSTIILLIEQIVVALGGEFKLYLPQLIPHMLRVFMHDNSQGRIVSIKLLAAIQLFGANLDDYLHLLLPPIVKLFDAPEVPLPSRKAALETVDRLTESLDFTDYASRIIHPIVRTLDQSPELRSTAMDTLSSLVFQLGKKYQIFIPMVNKVLVRHRINHQRYDVLICRIVKGYTLADEEEDPLIYQHRMLRSSQGDALASGPVETGPMKKLHVSTINLQKAWGAARRVSKDDWLEWLRRLSLELLKDSSSPSLRSCWALAQAYNPMARDLFNAAFVSCWSELNEDQQDELIRSIELALTSQDIAEVTQTLLNLAEFMEHSDKGPLPLRDDNGIVLLGERAAKCRAYAKALHYKELEFQKGPTPAILESLISINNKLQQPEAASGVLEYAMKHFGELEIQATWYEKLHEWEDALVAYDKKMDTNKEDPELMLGRMRCLEALGEWGQLHQQCCEKWTLVNDETQAKMARMAAAAAWGLGQWDSMEEYTCMIPRDTHDGAFYRAVLALHQDLFSLAQQCIDKARDLLDAELTAMAGESYSRAYGAMVSCHMLSELEEVIQYKLVPERREIIRQIWWERLQGCQRIVEDWQKILMVRSLVVSPHEDMRTWLKYASLCGKSGRLALAHKTLVLLLGVDPSRQLDHPLPTAHPQVTYAYMKNMWKSARKIDAFQHMQHFVQTMQQQAQHAIATEDQQHKQELHKLMARCFLKLGEWQLNLQGINESTIPKVLQYYSAATEHDRSWYKAWHAWAVMNFEAVLHYKHQNQARDEKKKLRHASGANITNATTAATTAASAAAATSTEGSNSESEAESNENSPTPSPLQKKVTEDLSKTLLLYTVPAVQGFFRSISLSRGNNLQDTLRVLTLWFDYGHWPDVNEALVEGVKAIQIDTWLQVIPQLIARIDTPRPLVGRLIHQLLTDIGRYHPQALIYPLTVASKSTTTARHNAANKILKNMCEHSNTLVQQAMMVSEELIRVAILWHEMWHEGLEEASRLYFGERNVKGMFEVLEPLHAMMERGPQTLKETSFNQAYGRDLMEAQEWCRKYMKSGNVKDLTQAWDLYYHVFRRISKQLPQLTSLELQYVSPKLLMCRDLELAVPGTYDPNQPIIRIQSIAPSLQVITSKQRPRKLTLMGSNGHEFVFLLKGHEDLRQDERVMQLFGLVNTLLANDPTSLRKNLSIQRYAVIPLSTNSGLIGWVPHCDTLHALIRDYREKKKILLNIEHRIMLRMAPDYDHLTLMQKVEVFEHAVNNTAGDDLAKLLWLKSPSSEVWFDRRTNYTRSLAVMSMVGYILGLGDRHPSNLMLDRLSGKILHIDFGDCFEVAMTREKFPEKIPFRLTRMLTNAMEVTGLDGNYRTTCHTVMEVLREHKDSVMAVLEAFVYDPLLNWRLMDTNTKGNKRSRTRTDSYSAGQSVEILDGVELGEPAHKKAGTTVPESIHSFIGDGLVKPEALNKKAIQIINRVRDKLTGRDFSHDDTLDVPTQVELLIKQATSHENLCQCYIGWCPFW</sequence>
<gene>
    <name evidence="44 46" type="primary">Mtor</name>
    <name type="synonym">Frap</name>
    <name type="synonym">Frap1</name>
</gene>
<evidence type="ECO:0000250" key="1">
    <source>
        <dbReference type="UniProtKB" id="P42345"/>
    </source>
</evidence>
<evidence type="ECO:0000255" key="2">
    <source>
        <dbReference type="PROSITE-ProRule" id="PRU00269"/>
    </source>
</evidence>
<evidence type="ECO:0000255" key="3">
    <source>
        <dbReference type="PROSITE-ProRule" id="PRU00534"/>
    </source>
</evidence>
<evidence type="ECO:0000255" key="4">
    <source>
        <dbReference type="PROSITE-ProRule" id="PRU00535"/>
    </source>
</evidence>
<evidence type="ECO:0000256" key="5">
    <source>
        <dbReference type="SAM" id="MobiDB-lite"/>
    </source>
</evidence>
<evidence type="ECO:0000269" key="6">
    <source>
    </source>
</evidence>
<evidence type="ECO:0000269" key="7">
    <source>
    </source>
</evidence>
<evidence type="ECO:0000269" key="8">
    <source>
    </source>
</evidence>
<evidence type="ECO:0000269" key="9">
    <source>
    </source>
</evidence>
<evidence type="ECO:0000269" key="10">
    <source>
    </source>
</evidence>
<evidence type="ECO:0000269" key="11">
    <source>
    </source>
</evidence>
<evidence type="ECO:0000269" key="12">
    <source>
    </source>
</evidence>
<evidence type="ECO:0000269" key="13">
    <source>
    </source>
</evidence>
<evidence type="ECO:0000269" key="14">
    <source>
    </source>
</evidence>
<evidence type="ECO:0000269" key="15">
    <source>
    </source>
</evidence>
<evidence type="ECO:0000269" key="16">
    <source>
    </source>
</evidence>
<evidence type="ECO:0000269" key="17">
    <source>
    </source>
</evidence>
<evidence type="ECO:0000269" key="18">
    <source>
    </source>
</evidence>
<evidence type="ECO:0000269" key="19">
    <source>
    </source>
</evidence>
<evidence type="ECO:0000269" key="20">
    <source>
    </source>
</evidence>
<evidence type="ECO:0000269" key="21">
    <source>
    </source>
</evidence>
<evidence type="ECO:0000269" key="22">
    <source>
    </source>
</evidence>
<evidence type="ECO:0000269" key="23">
    <source>
    </source>
</evidence>
<evidence type="ECO:0000269" key="24">
    <source>
    </source>
</evidence>
<evidence type="ECO:0000269" key="25">
    <source>
    </source>
</evidence>
<evidence type="ECO:0000269" key="26">
    <source>
    </source>
</evidence>
<evidence type="ECO:0000269" key="27">
    <source>
    </source>
</evidence>
<evidence type="ECO:0000269" key="28">
    <source>
    </source>
</evidence>
<evidence type="ECO:0000269" key="29">
    <source>
    </source>
</evidence>
<evidence type="ECO:0000269" key="30">
    <source>
    </source>
</evidence>
<evidence type="ECO:0000269" key="31">
    <source>
    </source>
</evidence>
<evidence type="ECO:0000269" key="32">
    <source>
    </source>
</evidence>
<evidence type="ECO:0000269" key="33">
    <source>
    </source>
</evidence>
<evidence type="ECO:0000269" key="34">
    <source>
    </source>
</evidence>
<evidence type="ECO:0000269" key="35">
    <source>
    </source>
</evidence>
<evidence type="ECO:0000269" key="36">
    <source>
    </source>
</evidence>
<evidence type="ECO:0000269" key="37">
    <source>
    </source>
</evidence>
<evidence type="ECO:0000269" key="38">
    <source>
    </source>
</evidence>
<evidence type="ECO:0000269" key="39">
    <source>
    </source>
</evidence>
<evidence type="ECO:0000269" key="40">
    <source>
    </source>
</evidence>
<evidence type="ECO:0000269" key="41">
    <source>
    </source>
</evidence>
<evidence type="ECO:0000269" key="42">
    <source>
    </source>
</evidence>
<evidence type="ECO:0000303" key="43">
    <source>
    </source>
</evidence>
<evidence type="ECO:0000303" key="44">
    <source>
    </source>
</evidence>
<evidence type="ECO:0000305" key="45"/>
<evidence type="ECO:0000312" key="46">
    <source>
        <dbReference type="MGI" id="MGI:1928394"/>
    </source>
</evidence>
<evidence type="ECO:0007744" key="47">
    <source>
    </source>
</evidence>
<evidence type="ECO:0007744" key="48">
    <source>
    </source>
</evidence>